<organism>
    <name type="scientific">Homo sapiens</name>
    <name type="common">Human</name>
    <dbReference type="NCBI Taxonomy" id="9606"/>
    <lineage>
        <taxon>Eukaryota</taxon>
        <taxon>Metazoa</taxon>
        <taxon>Chordata</taxon>
        <taxon>Craniata</taxon>
        <taxon>Vertebrata</taxon>
        <taxon>Euteleostomi</taxon>
        <taxon>Mammalia</taxon>
        <taxon>Eutheria</taxon>
        <taxon>Euarchontoglires</taxon>
        <taxon>Primates</taxon>
        <taxon>Haplorrhini</taxon>
        <taxon>Catarrhini</taxon>
        <taxon>Hominidae</taxon>
        <taxon>Homo</taxon>
    </lineage>
</organism>
<protein>
    <recommendedName>
        <fullName evidence="45">Autophagy-related protein 16-1</fullName>
    </recommendedName>
    <alternativeName>
        <fullName evidence="44">APG16-like 1</fullName>
    </alternativeName>
</protein>
<comment type="function">
    <text evidence="1 10 13 16 19 20 22 23 25 27 32 34 36 39">Plays an essential role in both canonical and non-canonical autophagy: interacts with ATG12-ATG5 to mediate the lipidation to ATG8 family proteins (MAP1LC3A, MAP1LC3B, MAP1LC3C, GABARAPL1, GABARAPL2 and GABARAP) (PubMed:23376921, PubMed:23392225, PubMed:24553140, PubMed:24954904, PubMed:27273576, PubMed:29317426, PubMed:30778222, PubMed:33909989). Acts as a molecular hub, coordinating autophagy pathways via distinct domains that support either canonical or non-canonical signaling (PubMed:29317426, PubMed:30778222). During canonical autophagy, interacts with ATG12-ATG5 to mediate the conjugation of phosphatidylethanolamine (PE) to ATG8 proteins, to produce a membrane-bound activated form of ATG8 (PubMed:23376921, PubMed:23392225, PubMed:24553140, PubMed:24954904, PubMed:27273576). Thereby, controls the elongation of the nascent autophagosomal membrane (PubMed:23376921, PubMed:23392225, PubMed:24553140, PubMed:24954904, PubMed:27273576). As part of the ATG8 conjugation system with ATG5 and ATG12, required for recruitment of LRRK2 to stressed lysosomes and induction of LRRK2 kinase activity in response to lysosomal stress (By similarity). Also involved in non-canonical autophagy, a parallel pathway involving conjugation of ATG8 proteins to single membranes at endolysosomal compartments, probably by catalyzing conjugation of phosphatidylserine (PS) to ATG8 (PubMed:33909989). Non-canonical autophagy plays a key role in epithelial cells to limit lethal infection by influenza A (IAV) virus (By similarity). Regulates mitochondrial antiviral signaling (MAVS)-dependent type I interferon (IFN-I) production (PubMed:22749352, PubMed:25645662). Negatively regulates NOD1- and NOD2-driven inflammatory cytokine response (PubMed:24238340). Instead, promotes an autophagy-dependent antibacterial pathway together with NOD1 or NOD2 (PubMed:20637199). Plays a role in regulating morphology and function of Paneth cell (PubMed:18849966).</text>
</comment>
<comment type="subunit">
    <text evidence="1 14 15 16 17 18 19 20 21 25 26 28 29 30 31 32 33 34 35 36 37 38">Homodimer (PubMed:25484072). Homooligomer (By similarity). Heterooligomer with ATG16L2 (By similarity). Interacts with WIPI1 (PubMed:28561066). Interacts with WIPI2 (PubMed:24954904, PubMed:28561066). Interacts with RB1CC1; the interaction is required for ULK1 complex-dependent autophagy (PubMed:23262492, PubMed:23392225, PubMed:24954904). Interacts with ATG5 (PubMed:23202584, PubMed:24191030, PubMed:25484072, PubMed:26812546). Part of the minor complex composed of 4 sets of ATG12-ATG5 and ATG16L1 (400 kDa); this complex interacts with ATG3 leading to disruption of ATG7 interaction and promotion of ATG8-like proteins lipidation (PubMed:23202584, PubMed:24191030, PubMed:26083323, PubMed:29317426, PubMed:30778222). Part of the major complex composed of 8 sets of ATG12-ATG5 and ATG16L1 (800 kDa) (PubMed:23202584, PubMed:26083323, PubMed:29317426, PubMed:30778222). Interacts with RAB33B (GTP- and GDP-bound forms); the complex consists of a tetramer where two RAB33B molecules bind independently one molecule of the ATG16L1 homodimer; the interaction promotes ATG12-ATG5-ATG16L1 complex recruitment to phagophores (PubMed:21808068, PubMed:32960676). Interacts (via WD repeats) with TMEM59; the interaction mediates unconventional autophagic activity of TMEM59 (PubMed:23376921, PubMed:27273576). Interacts with TLR2 (PubMed:23376921). Interacts (via WD repeats) with MEFV (PubMed:26347139). Interacts with PPP1CA; the interaction dephosphorylates ATG16L1 causing dissociation of ATG12-ATG5-ATG16L1 complex (PubMed:26083323). Interacts (via N-terminal) with CLTC (PubMed:20639872). Interacts with NOD1 (By similarity). Interacts with NOD2 (PubMed:20637199). Interacts with TUFM (PubMed:22749352). Interacts with TRIM16 (PubMed:30143514). Interacts (via WD repeats) with SPATA33 (PubMed:33087875). Interacts with IRGM (PubMed:25891078).</text>
</comment>
<comment type="interaction">
    <interactant intactId="EBI-535909">
        <id>Q676U5</id>
    </interactant>
    <interactant intactId="EBI-535909">
        <id>Q676U5</id>
        <label>ATG16L1</label>
    </interactant>
    <organismsDiffer>false</organismsDiffer>
    <experiments>2</experiments>
</comment>
<comment type="interaction">
    <interactant intactId="EBI-535909">
        <id>Q676U5</id>
    </interactant>
    <interactant intactId="EBI-1047414">
        <id>Q9H1Y0</id>
        <label>ATG5</label>
    </interactant>
    <organismsDiffer>false</organismsDiffer>
    <experiments>11</experiments>
</comment>
<comment type="interaction">
    <interactant intactId="EBI-535909">
        <id>Q676U5</id>
    </interactant>
    <interactant intactId="EBI-720116">
        <id>P60520</id>
        <label>GABARAPL2</label>
    </interactant>
    <organismsDiffer>false</organismsDiffer>
    <experiments>2</experiments>
</comment>
<comment type="interaction">
    <interactant intactId="EBI-535909">
        <id>Q676U5</id>
    </interactant>
    <interactant intactId="EBI-373144">
        <id>Q9GZQ8</id>
        <label>MAP1LC3B</label>
    </interactant>
    <organismsDiffer>false</organismsDiffer>
    <experiments>2</experiments>
</comment>
<comment type="interaction">
    <interactant intactId="EBI-535909">
        <id>Q676U5</id>
    </interactant>
    <interactant intactId="EBI-2603996">
        <id>Q9BXW4</id>
        <label>MAP1LC3C</label>
    </interactant>
    <organismsDiffer>false</organismsDiffer>
    <experiments>4</experiments>
</comment>
<comment type="interaction">
    <interactant intactId="EBI-535909">
        <id>Q676U5</id>
    </interactant>
    <interactant intactId="EBI-744685">
        <id>Q14088</id>
        <label>RAB33A</label>
    </interactant>
    <organismsDiffer>false</organismsDiffer>
    <experiments>5</experiments>
</comment>
<comment type="interaction">
    <interactant intactId="EBI-535909">
        <id>Q676U5</id>
    </interactant>
    <interactant intactId="EBI-3048549">
        <id>Q9H082</id>
        <label>RAB33B</label>
    </interactant>
    <organismsDiffer>false</organismsDiffer>
    <experiments>5</experiments>
</comment>
<comment type="interaction">
    <interactant intactId="EBI-535909">
        <id>Q676U5</id>
    </interactant>
    <interactant intactId="EBI-1047793">
        <id>Q8TDY2</id>
        <label>RB1CC1</label>
    </interactant>
    <organismsDiffer>false</organismsDiffer>
    <experiments>6</experiments>
</comment>
<comment type="interaction">
    <interactant intactId="EBI-535909">
        <id>Q676U5</id>
    </interactant>
    <interactant intactId="EBI-7054441">
        <id>Q9BXS4</id>
        <label>TMEM59</label>
    </interactant>
    <organismsDiffer>false</organismsDiffer>
    <experiments>6</experiments>
</comment>
<comment type="interaction">
    <interactant intactId="EBI-52363471">
        <id>Q676U5-1</id>
    </interactant>
    <interactant intactId="EBI-6115771">
        <id>Q9BYX4</id>
        <label>IFIH1</label>
    </interactant>
    <organismsDiffer>false</organismsDiffer>
    <experiments>2</experiments>
</comment>
<comment type="interaction">
    <interactant intactId="EBI-52363471">
        <id>Q676U5-1</id>
    </interactant>
    <interactant intactId="EBI-6374482">
        <id>Q9NX02</id>
        <label>NLRP2</label>
    </interactant>
    <organismsDiffer>false</organismsDiffer>
    <experiments>2</experiments>
</comment>
<comment type="interaction">
    <interactant intactId="EBI-52363471">
        <id>Q676U5-1</id>
    </interactant>
    <interactant intactId="EBI-527670">
        <id>P21580</id>
        <label>TNFAIP3</label>
    </interactant>
    <organismsDiffer>false</organismsDiffer>
    <experiments>3</experiments>
</comment>
<comment type="subcellular location">
    <subcellularLocation>
        <location evidence="20">Cytoplasm</location>
    </subcellularLocation>
    <subcellularLocation>
        <location evidence="14 20 37">Preautophagosomal structure membrane</location>
        <topology evidence="45">Peripheral membrane protein</topology>
    </subcellularLocation>
    <subcellularLocation>
        <location evidence="34">Endosome membrane</location>
        <topology evidence="45">Peripheral membrane protein</topology>
    </subcellularLocation>
    <subcellularLocation>
        <location evidence="34">Lysosome membrane</location>
        <topology evidence="45">Peripheral membrane protein</topology>
    </subcellularLocation>
    <text evidence="1 34 37">Recruited to omegasomes membranes by WIPI2 (By similarity). Omegasomes are endoplasmic reticulum connected strutures at the origin of preautophagosomal structures (By similarity). Localized to preautophagosomal structure (PAS) where it is involved in the membrane targeting of ATG5 (By similarity). Also localizes to discrete punctae along the ciliary axoneme (By similarity). Upon activation of non-canonical autophagy, recruited to single-membrane endolysosomal compartments (PubMed:29317426). Under starved conditions, the ATG12-ATG5-ATG16L1 complex is translocated to phagophores driven by RAB33B (PubMed:32960676).</text>
</comment>
<comment type="alternative products">
    <event type="alternative splicing"/>
    <isoform>
        <id>Q676U5-1</id>
        <name>1</name>
        <name>APG16L beta</name>
        <sequence type="displayed"/>
    </isoform>
    <isoform>
        <id>Q676U5-2</id>
        <name>2</name>
        <sequence type="described" ref="VSP_013386"/>
    </isoform>
    <isoform>
        <id>Q676U5-3</id>
        <name>3</name>
        <sequence type="described" ref="VSP_013387 VSP_013388"/>
    </isoform>
    <isoform>
        <id>Q676U5-4</id>
        <name>4</name>
        <sequence type="described" ref="VSP_013389 VSP_013390"/>
    </isoform>
    <isoform>
        <id>Q676U5-5</id>
        <name>5</name>
        <sequence type="described" ref="VSP_013389 VSP_013386"/>
    </isoform>
</comment>
<comment type="domain">
    <text evidence="1 34">The WD repeats are required for non-canonical autophagy but not for canonical autophagy (PubMed:29317426). The WD repeats are required for the recruitment of LRRK2 to stressed lysosomes (By similarity).</text>
</comment>
<comment type="PTM">
    <text evidence="23">Proteolytic cleavage by activated CASP3 leads to degradation and may regulate autophagy upon cellular stress and apoptotic stimuli.</text>
</comment>
<comment type="PTM">
    <text evidence="29">Phosphorylation at Ser-139 promotes association with the ATG12-ATG5 conjugate to form the ATG12-ATG5-ATG16L1 complex.</text>
</comment>
<comment type="disease" evidence="5 6 7 8 9 11 12 24">
    <disease id="DI-02658">
        <name>Inflammatory bowel disease 10</name>
        <acronym>IBD10</acronym>
        <description>A chronic, relapsing inflammation of the gastrointestinal tract with a complex etiology. It is subdivided into Crohn disease and ulcerative colitis phenotypes. Crohn disease may affect any part of the gastrointestinal tract from the mouth to the anus, but most frequently it involves the terminal ileum and colon. Bowel inflammation is transmural and discontinuous; it may contain granulomas or be associated with intestinal or perianal fistulas. In contrast, in ulcerative colitis, the inflammation is continuous and limited to rectal and colonic mucosal layers; fistulas and granulomas are not observed. Both diseases include extraintestinal inflammation of the skin, eyes, or joints.</description>
        <dbReference type="MIM" id="611081"/>
    </disease>
    <text>Disease susceptibility is associated with variants affecting the gene represented in this entry.</text>
</comment>
<comment type="miscellaneous">
    <molecule>Isoform 3</molecule>
    <text evidence="45">May be produced at very low levels due to a premature stop codon in the mRNA, leading to nonsense-mediated mRNA decay.</text>
</comment>
<comment type="similarity">
    <text evidence="45">Belongs to the WD repeat ATG16 family.</text>
</comment>
<comment type="sequence caution" evidence="45">
    <conflict type="erroneous translation">
        <sequence resource="EMBL-CDS" id="BAB15448"/>
    </conflict>
    <text>Wrong choice of CDS.</text>
</comment>
<comment type="sequence caution" evidence="45">
    <conflict type="erroneous initiation">
        <sequence resource="EMBL-CDS" id="BAB55412"/>
    </conflict>
    <text>Truncated N-terminus.</text>
</comment>
<sequence length="607" mass="68265">MSSGLRAADFPRWKRHISEQLRRRDRLQRQAFEEIILQYNKLLEKSDLHSVLAQKLQAEKHDVPNRHEISPGHDGTWNDNQLQEMAQLRIKHQEELTELHKKRGELAQLVIDLNNQMQRKDREMQMNEAKIAECLQTISDLETECLDLRTKLCDLERANQTLKDEYDALQITFTALEGKLRKTTEENQELVTRWMAEKAQEANRLNAENEKDSRRRQARLQKELAEAAKEPLPVEQDDDIEVIVDETSDHTEETSPVRAISRAATKRLSQPAGGLLDSITNIFGRRSVSSFPVPQDNVDTHPGSGKEVRVPATALCVFDAHDGEVNAVQFSPGSRLLATGGMDRRVKLWEVFGEKCEFKGSLSGSNAGITSIEFDSAGSYLLAASNDFASRIWTVDDYRLRHTLTGHSGKVLSAKFLLDNARIVSGSHDRTLKLWDLRSKVCIKTVFAGSSCNDIVCTEQCVMSGHFDKKIRFWDIRSESIVREMELLGKITALDLNPERTELLSCSRDDLLKVIDLRTNAIKQTFSAPGFKCGSDWTRVVFSPDGSYVAAGSAEGSLYIWSVLTGKVEKVLSKQHSSSINAVAWSPSGSHVVSVDKGCKAVLWAQY</sequence>
<feature type="chain" id="PRO_0000050848" description="Autophagy-related protein 16-1">
    <location>
        <begin position="1"/>
        <end position="607"/>
    </location>
</feature>
<feature type="repeat" description="WD 1" evidence="3">
    <location>
        <begin position="320"/>
        <end position="359"/>
    </location>
</feature>
<feature type="repeat" description="WD 2" evidence="3">
    <location>
        <begin position="364"/>
        <end position="403"/>
    </location>
</feature>
<feature type="repeat" description="WD 3" evidence="3">
    <location>
        <begin position="406"/>
        <end position="445"/>
    </location>
</feature>
<feature type="repeat" description="WD 4" evidence="3">
    <location>
        <begin position="447"/>
        <end position="484"/>
    </location>
</feature>
<feature type="repeat" description="WD 5" evidence="3">
    <location>
        <begin position="486"/>
        <end position="525"/>
    </location>
</feature>
<feature type="repeat" description="WD 6" evidence="3">
    <location>
        <begin position="532"/>
        <end position="573"/>
    </location>
</feature>
<feature type="repeat" description="WD 7" evidence="3">
    <location>
        <begin position="575"/>
        <end position="607"/>
    </location>
</feature>
<feature type="region of interest" description="Interaction with ATG5" evidence="26">
    <location>
        <begin position="13"/>
        <end position="43"/>
    </location>
</feature>
<feature type="region of interest" description="WIPI2-binding" evidence="25">
    <location>
        <begin position="207"/>
        <end position="230"/>
    </location>
</feature>
<feature type="region of interest" description="RB1CC1-binding" evidence="20 25">
    <location>
        <begin position="230"/>
        <end position="242"/>
    </location>
</feature>
<feature type="coiled-coil region" evidence="2">
    <location>
        <begin position="78"/>
        <end position="230"/>
    </location>
</feature>
<feature type="short sequence motif" description="Caspase cleavage" evidence="23">
    <location>
        <begin position="296"/>
        <end position="299"/>
    </location>
</feature>
<feature type="modified residue" description="Phosphoserine; by CK2" evidence="29">
    <location>
        <position position="139"/>
    </location>
</feature>
<feature type="modified residue" description="Phosphoserine" evidence="48">
    <location>
        <position position="269"/>
    </location>
</feature>
<feature type="modified residue" description="Phosphoserine" evidence="47 48 49">
    <location>
        <position position="287"/>
    </location>
</feature>
<feature type="splice variant" id="VSP_013389" description="In isoform 4 and isoform 5." evidence="41 44">
    <location>
        <begin position="70"/>
        <end position="213"/>
    </location>
</feature>
<feature type="splice variant" id="VSP_013386" description="In isoform 2 and isoform 5." evidence="41 42 44">
    <location>
        <begin position="266"/>
        <end position="284"/>
    </location>
</feature>
<feature type="splice variant" id="VSP_013390" description="In isoform 4." evidence="41">
    <location>
        <begin position="334"/>
        <end position="368"/>
    </location>
</feature>
<feature type="splice variant" id="VSP_013387" description="In isoform 3." evidence="40">
    <original>IKTVFAGSSCNDIVCTEQCVMSGHFDKK</original>
    <variation>EEIQSLCLCICLDVSVEVCVCTSEPAFM</variation>
    <location>
        <begin position="443"/>
        <end position="470"/>
    </location>
</feature>
<feature type="splice variant" id="VSP_013388" description="In isoform 3." evidence="40">
    <location>
        <begin position="471"/>
        <end position="607"/>
    </location>
</feature>
<feature type="sequence variant" id="VAR_021834" description="Risk factor for IBD10; has no effect on the stability of the protein under normal conditions; enhances the cleavage and the degradation mediated by activated CASP3; results in reduced autophagy and defective clearance of intestinal pathogens; impairs interaction with TMEM59; slows TMEM59 intracellular trafficking; increases production of type I IFNs; dbSNP:rs2241880." evidence="4 5 7 8 9 11 12 23 24 27 32">
    <original>T</original>
    <variation>A</variation>
    <location>
        <position position="300"/>
    </location>
</feature>
<feature type="sequence variant" id="VAR_053386" description="In dbSNP:rs1866878.">
    <original>E</original>
    <variation>K</variation>
    <location>
        <position position="307"/>
    </location>
</feature>
<feature type="mutagenesis site" description="Abolishes interaction with ATG5." evidence="26">
    <original>I</original>
    <variation>W</variation>
    <location>
        <position position="17"/>
    </location>
</feature>
<feature type="mutagenesis site" description="Abolishes interaction with ATG5." evidence="26">
    <original>L</original>
    <variation>W</variation>
    <location>
        <position position="21"/>
    </location>
</feature>
<feature type="mutagenesis site" description="Abolishes interaction with ATG5." evidence="26">
    <original>R</original>
    <variation>D</variation>
    <location>
        <position position="24"/>
    </location>
</feature>
<feature type="mutagenesis site" description="In FII mutant; abolished binding to membranes and lipidation to ATG8 family proteins." evidence="36">
    <original>FEEII</original>
    <variation>AEEAA</variation>
    <location>
        <begin position="32"/>
        <end position="36"/>
    </location>
</feature>
<feature type="mutagenesis site" description="Reduces interaction with ATG5." evidence="26">
    <original>I</original>
    <variation>W</variation>
    <location>
        <position position="36"/>
    </location>
</feature>
<feature type="mutagenesis site" description="Abolishes phosphorylation. Impairs interaction with ATG12-ATG5 complex." evidence="29">
    <original>S</original>
    <variation>A</variation>
    <location>
        <position position="139"/>
    </location>
</feature>
<feature type="mutagenesis site" description="Decreased binding affinity by 36-fold with RAB33B. Decreased binding affinity by 254-fold with RAB33B and colocalization to phagophore; when associated with A-209. No change in interaction with ATG5-ATG12 complex; when associated with A-209." evidence="37">
    <original>N</original>
    <variation>A</variation>
    <location>
        <position position="206"/>
    </location>
</feature>
<feature type="mutagenesis site" description="Decreased binding affinity by 9-fold with RAB33B. Decreased binding affinity by 254-fold with RAB33B and colocalization to phagophore; when associated with A-206. No change in interaction with ATG5-ATG12 complex; when associated with A-209." evidence="37">
    <original>N</original>
    <variation>A</variation>
    <location>
        <position position="209"/>
    </location>
</feature>
<feature type="mutagenesis site" description="Impairs interaction with WIPI2." evidence="25">
    <original>E</original>
    <variation>R</variation>
    <location>
        <position position="226"/>
    </location>
</feature>
<feature type="mutagenesis site" description="Impairs interaction with WIPI2." evidence="25">
    <original>E</original>
    <variation>R</variation>
    <location>
        <position position="230"/>
    </location>
</feature>
<feature type="mutagenesis site" description="Prevents cleavage by activated CASP3." evidence="23">
    <original>D</original>
    <variation>E</variation>
    <location>
        <position position="299"/>
    </location>
</feature>
<feature type="mutagenesis site" description="In VRV mutant; abolished binding to membranes and lipidation to ATG8 family proteins." evidence="36">
    <original>VRV</original>
    <variation>AAA</variation>
    <location>
        <begin position="308"/>
        <end position="310"/>
    </location>
</feature>
<feature type="mutagenesis site" description="Abolished non-canonical autophagy without affecting canonical autophagy." evidence="34 36">
    <original>F</original>
    <variation>A</variation>
    <location>
        <position position="467"/>
    </location>
</feature>
<feature type="mutagenesis site" description="Abolished non-canonical autophagy without affecting canonical autophagy. Impaired conjugation of phosphatidylserine (PS) to LC3 proteins." evidence="34 39">
    <original>K</original>
    <variation>A</variation>
    <location>
        <position position="490"/>
    </location>
</feature>
<feature type="mutagenesis site" description="Impairs interaction with PPP1CA; when associated with A-542." evidence="29">
    <original>V</original>
    <variation>A</variation>
    <location>
        <position position="540"/>
    </location>
</feature>
<feature type="mutagenesis site" description="Impairs interaction with PPP1CA; when associated with A-540." evidence="29">
    <original>F</original>
    <variation>A</variation>
    <location>
        <position position="542"/>
    </location>
</feature>
<feature type="sequence conflict" description="In Ref. 6; BAB55412." evidence="45" ref="6">
    <original>K</original>
    <variation>R</variation>
    <location>
        <position position="151"/>
    </location>
</feature>
<feature type="sequence conflict" description="In Ref. 6; BAB55412." evidence="45" ref="6">
    <original>V</original>
    <variation>A</variation>
    <location>
        <position position="328"/>
    </location>
</feature>
<feature type="sequence conflict" description="In Ref. 6; BAB55412." evidence="45" ref="6">
    <original>P</original>
    <variation>T</variation>
    <location>
        <position position="529"/>
    </location>
</feature>
<feature type="helix" evidence="50">
    <location>
        <begin position="12"/>
        <end position="28"/>
    </location>
</feature>
<feature type="helix" evidence="50">
    <location>
        <begin position="30"/>
        <end position="42"/>
    </location>
</feature>
<feature type="helix" evidence="53">
    <location>
        <begin position="127"/>
        <end position="186"/>
    </location>
</feature>
<feature type="helix" evidence="52">
    <location>
        <begin position="210"/>
        <end position="228"/>
    </location>
</feature>
<feature type="strand" evidence="51">
    <location>
        <begin position="313"/>
        <end position="319"/>
    </location>
</feature>
<feature type="strand" evidence="51">
    <location>
        <begin position="321"/>
        <end position="323"/>
    </location>
</feature>
<feature type="strand" evidence="51">
    <location>
        <begin position="325"/>
        <end position="330"/>
    </location>
</feature>
<feature type="strand" evidence="51">
    <location>
        <begin position="334"/>
        <end position="341"/>
    </location>
</feature>
<feature type="strand" evidence="51">
    <location>
        <begin position="346"/>
        <end position="351"/>
    </location>
</feature>
<feature type="strand" evidence="51">
    <location>
        <begin position="356"/>
        <end position="362"/>
    </location>
</feature>
<feature type="strand" evidence="51">
    <location>
        <begin position="369"/>
        <end position="374"/>
    </location>
</feature>
<feature type="strand" evidence="51">
    <location>
        <begin position="378"/>
        <end position="385"/>
    </location>
</feature>
<feature type="strand" evidence="51">
    <location>
        <begin position="390"/>
        <end position="394"/>
    </location>
</feature>
<feature type="turn" evidence="51">
    <location>
        <begin position="395"/>
        <end position="398"/>
    </location>
</feature>
<feature type="strand" evidence="51">
    <location>
        <begin position="399"/>
        <end position="404"/>
    </location>
</feature>
<feature type="strand" evidence="51">
    <location>
        <begin position="411"/>
        <end position="416"/>
    </location>
</feature>
<feature type="strand" evidence="51">
    <location>
        <begin position="422"/>
        <end position="427"/>
    </location>
</feature>
<feature type="strand" evidence="51">
    <location>
        <begin position="430"/>
        <end position="436"/>
    </location>
</feature>
<feature type="turn" evidence="51">
    <location>
        <begin position="437"/>
        <end position="440"/>
    </location>
</feature>
<feature type="strand" evidence="51">
    <location>
        <begin position="441"/>
        <end position="447"/>
    </location>
</feature>
<feature type="strand" evidence="51">
    <location>
        <begin position="452"/>
        <end position="457"/>
    </location>
</feature>
<feature type="strand" evidence="51">
    <location>
        <begin position="459"/>
        <end position="466"/>
    </location>
</feature>
<feature type="strand" evidence="51">
    <location>
        <begin position="469"/>
        <end position="475"/>
    </location>
</feature>
<feature type="turn" evidence="51">
    <location>
        <begin position="476"/>
        <end position="479"/>
    </location>
</feature>
<feature type="strand" evidence="51">
    <location>
        <begin position="480"/>
        <end position="486"/>
    </location>
</feature>
<feature type="strand" evidence="51">
    <location>
        <begin position="491"/>
        <end position="496"/>
    </location>
</feature>
<feature type="strand" evidence="51">
    <location>
        <begin position="502"/>
        <end position="507"/>
    </location>
</feature>
<feature type="turn" evidence="51">
    <location>
        <begin position="508"/>
        <end position="510"/>
    </location>
</feature>
<feature type="strand" evidence="51">
    <location>
        <begin position="511"/>
        <end position="516"/>
    </location>
</feature>
<feature type="turn" evidence="51">
    <location>
        <begin position="517"/>
        <end position="520"/>
    </location>
</feature>
<feature type="strand" evidence="51">
    <location>
        <begin position="521"/>
        <end position="526"/>
    </location>
</feature>
<feature type="strand" evidence="51">
    <location>
        <begin position="540"/>
        <end position="542"/>
    </location>
</feature>
<feature type="strand" evidence="51">
    <location>
        <begin position="546"/>
        <end position="552"/>
    </location>
</feature>
<feature type="strand" evidence="51">
    <location>
        <begin position="558"/>
        <end position="562"/>
    </location>
</feature>
<feature type="turn" evidence="51">
    <location>
        <begin position="563"/>
        <end position="565"/>
    </location>
</feature>
<feature type="strand" evidence="51">
    <location>
        <begin position="568"/>
        <end position="572"/>
    </location>
</feature>
<feature type="strand" evidence="51">
    <location>
        <begin position="580"/>
        <end position="585"/>
    </location>
</feature>
<feature type="strand" evidence="51">
    <location>
        <begin position="592"/>
        <end position="596"/>
    </location>
</feature>
<feature type="strand" evidence="51">
    <location>
        <begin position="599"/>
        <end position="605"/>
    </location>
</feature>
<proteinExistence type="evidence at protein level"/>
<keyword id="KW-0002">3D-structure</keyword>
<keyword id="KW-0025">Alternative splicing</keyword>
<keyword id="KW-0072">Autophagy</keyword>
<keyword id="KW-0175">Coiled coil</keyword>
<keyword id="KW-0963">Cytoplasm</keyword>
<keyword id="KW-0967">Endosome</keyword>
<keyword id="KW-0458">Lysosome</keyword>
<keyword id="KW-0472">Membrane</keyword>
<keyword id="KW-0597">Phosphoprotein</keyword>
<keyword id="KW-0653">Protein transport</keyword>
<keyword id="KW-1267">Proteomics identification</keyword>
<keyword id="KW-1185">Reference proteome</keyword>
<keyword id="KW-0677">Repeat</keyword>
<keyword id="KW-0813">Transport</keyword>
<keyword id="KW-0853">WD repeat</keyword>
<name>A16L1_HUMAN</name>
<evidence type="ECO:0000250" key="1">
    <source>
        <dbReference type="UniProtKB" id="Q8C0J2"/>
    </source>
</evidence>
<evidence type="ECO:0000255" key="2"/>
<evidence type="ECO:0000255" key="3">
    <source>
        <dbReference type="PROSITE-ProRule" id="PRU00221"/>
    </source>
</evidence>
<evidence type="ECO:0000269" key="4">
    <source>
    </source>
</evidence>
<evidence type="ECO:0000269" key="5">
    <source>
    </source>
</evidence>
<evidence type="ECO:0000269" key="6">
    <source>
    </source>
</evidence>
<evidence type="ECO:0000269" key="7">
    <source>
    </source>
</evidence>
<evidence type="ECO:0000269" key="8">
    <source>
    </source>
</evidence>
<evidence type="ECO:0000269" key="9">
    <source>
    </source>
</evidence>
<evidence type="ECO:0000269" key="10">
    <source>
    </source>
</evidence>
<evidence type="ECO:0000269" key="11">
    <source>
    </source>
</evidence>
<evidence type="ECO:0000269" key="12">
    <source>
    </source>
</evidence>
<evidence type="ECO:0000269" key="13">
    <source>
    </source>
</evidence>
<evidence type="ECO:0000269" key="14">
    <source>
    </source>
</evidence>
<evidence type="ECO:0000269" key="15">
    <source>
    </source>
</evidence>
<evidence type="ECO:0000269" key="16">
    <source>
    </source>
</evidence>
<evidence type="ECO:0000269" key="17">
    <source>
    </source>
</evidence>
<evidence type="ECO:0000269" key="18">
    <source>
    </source>
</evidence>
<evidence type="ECO:0000269" key="19">
    <source>
    </source>
</evidence>
<evidence type="ECO:0000269" key="20">
    <source>
    </source>
</evidence>
<evidence type="ECO:0000269" key="21">
    <source>
    </source>
</evidence>
<evidence type="ECO:0000269" key="22">
    <source>
    </source>
</evidence>
<evidence type="ECO:0000269" key="23">
    <source>
    </source>
</evidence>
<evidence type="ECO:0000269" key="24">
    <source>
    </source>
</evidence>
<evidence type="ECO:0000269" key="25">
    <source>
    </source>
</evidence>
<evidence type="ECO:0000269" key="26">
    <source>
    </source>
</evidence>
<evidence type="ECO:0000269" key="27">
    <source>
    </source>
</evidence>
<evidence type="ECO:0000269" key="28">
    <source>
    </source>
</evidence>
<evidence type="ECO:0000269" key="29">
    <source>
    </source>
</evidence>
<evidence type="ECO:0000269" key="30">
    <source>
    </source>
</evidence>
<evidence type="ECO:0000269" key="31">
    <source>
    </source>
</evidence>
<evidence type="ECO:0000269" key="32">
    <source>
    </source>
</evidence>
<evidence type="ECO:0000269" key="33">
    <source>
    </source>
</evidence>
<evidence type="ECO:0000269" key="34">
    <source>
    </source>
</evidence>
<evidence type="ECO:0000269" key="35">
    <source>
    </source>
</evidence>
<evidence type="ECO:0000269" key="36">
    <source>
    </source>
</evidence>
<evidence type="ECO:0000269" key="37">
    <source>
    </source>
</evidence>
<evidence type="ECO:0000269" key="38">
    <source>
    </source>
</evidence>
<evidence type="ECO:0000269" key="39">
    <source>
    </source>
</evidence>
<evidence type="ECO:0000303" key="40">
    <source>
    </source>
</evidence>
<evidence type="ECO:0000303" key="41">
    <source>
    </source>
</evidence>
<evidence type="ECO:0000303" key="42">
    <source>
    </source>
</evidence>
<evidence type="ECO:0000303" key="43">
    <source>
    </source>
</evidence>
<evidence type="ECO:0000303" key="44">
    <source>
    </source>
</evidence>
<evidence type="ECO:0000305" key="45"/>
<evidence type="ECO:0000312" key="46">
    <source>
        <dbReference type="HGNC" id="HGNC:21498"/>
    </source>
</evidence>
<evidence type="ECO:0007744" key="47">
    <source>
    </source>
</evidence>
<evidence type="ECO:0007744" key="48">
    <source>
    </source>
</evidence>
<evidence type="ECO:0007744" key="49">
    <source>
    </source>
</evidence>
<evidence type="ECO:0007829" key="50">
    <source>
        <dbReference type="PDB" id="4NAW"/>
    </source>
</evidence>
<evidence type="ECO:0007829" key="51">
    <source>
        <dbReference type="PDB" id="5NUV"/>
    </source>
</evidence>
<evidence type="ECO:0007829" key="52">
    <source>
        <dbReference type="PDB" id="7F69"/>
    </source>
</evidence>
<evidence type="ECO:0007829" key="53">
    <source>
        <dbReference type="PDB" id="7XFR"/>
    </source>
</evidence>
<dbReference type="EMBL" id="AY398617">
    <property type="protein sequence ID" value="AAR32130.1"/>
    <property type="molecule type" value="mRNA"/>
</dbReference>
<dbReference type="EMBL" id="EF079889">
    <property type="protein sequence ID" value="ABN48554.1"/>
    <property type="molecule type" value="mRNA"/>
</dbReference>
<dbReference type="EMBL" id="EF079890">
    <property type="protein sequence ID" value="ABN48555.1"/>
    <property type="molecule type" value="mRNA"/>
</dbReference>
<dbReference type="EMBL" id="AY358182">
    <property type="protein sequence ID" value="AAQ88549.1"/>
    <property type="molecule type" value="mRNA"/>
</dbReference>
<dbReference type="EMBL" id="AK026330">
    <property type="protein sequence ID" value="BAB15448.1"/>
    <property type="status" value="ALT_SEQ"/>
    <property type="molecule type" value="mRNA"/>
</dbReference>
<dbReference type="EMBL" id="AK027854">
    <property type="protein sequence ID" value="BAB55412.1"/>
    <property type="status" value="ALT_INIT"/>
    <property type="molecule type" value="mRNA"/>
</dbReference>
<dbReference type="EMBL" id="AK123876">
    <property type="protein sequence ID" value="BAC85713.1"/>
    <property type="molecule type" value="mRNA"/>
</dbReference>
<dbReference type="EMBL" id="AC013726">
    <property type="status" value="NOT_ANNOTATED_CDS"/>
    <property type="molecule type" value="Genomic_DNA"/>
</dbReference>
<dbReference type="EMBL" id="CH471063">
    <property type="protein sequence ID" value="EAW71034.1"/>
    <property type="molecule type" value="Genomic_DNA"/>
</dbReference>
<dbReference type="EMBL" id="BC071846">
    <property type="protein sequence ID" value="AAH71846.1"/>
    <property type="molecule type" value="mRNA"/>
</dbReference>
<dbReference type="EMBL" id="AL834526">
    <property type="protein sequence ID" value="CAD39182.1"/>
    <property type="molecule type" value="mRNA"/>
</dbReference>
<dbReference type="CCDS" id="CCDS2502.2">
    <molecule id="Q676U5-2"/>
</dbReference>
<dbReference type="CCDS" id="CCDS2503.2">
    <molecule id="Q676U5-1"/>
</dbReference>
<dbReference type="CCDS" id="CCDS54438.1">
    <molecule id="Q676U5-5"/>
</dbReference>
<dbReference type="RefSeq" id="NP_001177195.1">
    <property type="nucleotide sequence ID" value="NM_001190266.1"/>
</dbReference>
<dbReference type="RefSeq" id="NP_001177196.1">
    <property type="nucleotide sequence ID" value="NM_001190267.1"/>
</dbReference>
<dbReference type="RefSeq" id="NP_060444.3">
    <molecule id="Q676U5-2"/>
    <property type="nucleotide sequence ID" value="NM_017974.3"/>
</dbReference>
<dbReference type="RefSeq" id="NP_110430.5">
    <molecule id="Q676U5-1"/>
    <property type="nucleotide sequence ID" value="NM_030803.6"/>
</dbReference>
<dbReference type="RefSeq" id="NP_942593.2">
    <molecule id="Q676U5-5"/>
    <property type="nucleotide sequence ID" value="NM_198890.3"/>
</dbReference>
<dbReference type="PDB" id="4GDK">
    <property type="method" value="X-ray"/>
    <property type="resolution" value="2.70 A"/>
    <property type="chains" value="C/F=11-43"/>
</dbReference>
<dbReference type="PDB" id="4GDL">
    <property type="method" value="X-ray"/>
    <property type="resolution" value="2.88 A"/>
    <property type="chains" value="C=11-43"/>
</dbReference>
<dbReference type="PDB" id="4NAW">
    <property type="method" value="X-ray"/>
    <property type="resolution" value="2.20 A"/>
    <property type="chains" value="C/G/K/O=11-43"/>
</dbReference>
<dbReference type="PDB" id="4TQ0">
    <property type="method" value="X-ray"/>
    <property type="resolution" value="2.70 A"/>
    <property type="chains" value="B/D/F=1-69"/>
</dbReference>
<dbReference type="PDB" id="5D7G">
    <property type="method" value="X-ray"/>
    <property type="resolution" value="3.00 A"/>
    <property type="chains" value="B/D/F/H=1-69"/>
</dbReference>
<dbReference type="PDB" id="5NPV">
    <property type="method" value="X-ray"/>
    <property type="resolution" value="3.10 A"/>
    <property type="chains" value="B/D=11-307"/>
</dbReference>
<dbReference type="PDB" id="5NPW">
    <property type="method" value="X-ray"/>
    <property type="resolution" value="3.10 A"/>
    <property type="chains" value="B/D/F/H=11-307"/>
</dbReference>
<dbReference type="PDB" id="5NUV">
    <property type="method" value="X-ray"/>
    <property type="resolution" value="1.55 A"/>
    <property type="chains" value="A=303-607"/>
</dbReference>
<dbReference type="PDB" id="5ZYX">
    <property type="method" value="NMR"/>
    <property type="chains" value="A=12-31"/>
</dbReference>
<dbReference type="PDB" id="7F69">
    <property type="method" value="X-ray"/>
    <property type="resolution" value="1.50 A"/>
    <property type="chains" value="C=207-236"/>
</dbReference>
<dbReference type="PDB" id="7W36">
    <property type="method" value="X-ray"/>
    <property type="resolution" value="3.00 A"/>
    <property type="chains" value="B=13-33"/>
</dbReference>
<dbReference type="PDB" id="7XFR">
    <property type="method" value="X-ray"/>
    <property type="resolution" value="1.76 A"/>
    <property type="chains" value="B/D=124-188"/>
</dbReference>
<dbReference type="PDB" id="8ZQG">
    <property type="method" value="X-ray"/>
    <property type="resolution" value="2.77 A"/>
    <property type="chains" value="C/D=124-188"/>
</dbReference>
<dbReference type="PDBsum" id="4GDK"/>
<dbReference type="PDBsum" id="4GDL"/>
<dbReference type="PDBsum" id="4NAW"/>
<dbReference type="PDBsum" id="4TQ0"/>
<dbReference type="PDBsum" id="5D7G"/>
<dbReference type="PDBsum" id="5NPV"/>
<dbReference type="PDBsum" id="5NPW"/>
<dbReference type="PDBsum" id="5NUV"/>
<dbReference type="PDBsum" id="5ZYX"/>
<dbReference type="PDBsum" id="7F69"/>
<dbReference type="PDBsum" id="7W36"/>
<dbReference type="PDBsum" id="7XFR"/>
<dbReference type="PDBsum" id="8ZQG"/>
<dbReference type="SMR" id="Q676U5"/>
<dbReference type="BioGRID" id="120375">
    <property type="interactions" value="1142"/>
</dbReference>
<dbReference type="ComplexPortal" id="CPX-200">
    <property type="entry name" value="ATG12-ATG5-ATG16L1 complex"/>
</dbReference>
<dbReference type="CORUM" id="Q676U5"/>
<dbReference type="DIP" id="DIP-27552N"/>
<dbReference type="DIP" id="DIP-50290N"/>
<dbReference type="FunCoup" id="Q676U5">
    <property type="interactions" value="2957"/>
</dbReference>
<dbReference type="IntAct" id="Q676U5">
    <property type="interactions" value="1177"/>
</dbReference>
<dbReference type="MINT" id="Q676U5"/>
<dbReference type="STRING" id="9606.ENSP00000375873"/>
<dbReference type="TCDB" id="9.A.15.2.1">
    <property type="family name" value="the autophagy-related phagophore-formation transporter (apt) family"/>
</dbReference>
<dbReference type="iPTMnet" id="Q676U5"/>
<dbReference type="PhosphoSitePlus" id="Q676U5"/>
<dbReference type="SwissPalm" id="Q676U5"/>
<dbReference type="BioMuta" id="ATG16L1"/>
<dbReference type="DMDM" id="62510482"/>
<dbReference type="jPOST" id="Q676U5"/>
<dbReference type="MassIVE" id="Q676U5"/>
<dbReference type="PaxDb" id="9606-ENSP00000375872"/>
<dbReference type="PeptideAtlas" id="Q676U5"/>
<dbReference type="ProteomicsDB" id="65982">
    <molecule id="Q676U5-1"/>
</dbReference>
<dbReference type="ProteomicsDB" id="65983">
    <molecule id="Q676U5-2"/>
</dbReference>
<dbReference type="ProteomicsDB" id="65984">
    <molecule id="Q676U5-3"/>
</dbReference>
<dbReference type="ProteomicsDB" id="65985">
    <molecule id="Q676U5-4"/>
</dbReference>
<dbReference type="ProteomicsDB" id="65986">
    <molecule id="Q676U5-5"/>
</dbReference>
<dbReference type="Pumba" id="Q676U5"/>
<dbReference type="Antibodypedia" id="1969">
    <property type="antibodies" value="879 antibodies from 42 providers"/>
</dbReference>
<dbReference type="DNASU" id="55054"/>
<dbReference type="Ensembl" id="ENST00000347464.9">
    <molecule id="Q676U5-5"/>
    <property type="protein sequence ID" value="ENSP00000318259.6"/>
    <property type="gene ID" value="ENSG00000085978.22"/>
</dbReference>
<dbReference type="Ensembl" id="ENST00000373525.9">
    <molecule id="Q676U5-4"/>
    <property type="protein sequence ID" value="ENSP00000362625.5"/>
    <property type="gene ID" value="ENSG00000085978.22"/>
</dbReference>
<dbReference type="Ensembl" id="ENST00000392017.9">
    <molecule id="Q676U5-1"/>
    <property type="protein sequence ID" value="ENSP00000375872.4"/>
    <property type="gene ID" value="ENSG00000085978.22"/>
</dbReference>
<dbReference type="Ensembl" id="ENST00000392020.8">
    <molecule id="Q676U5-2"/>
    <property type="protein sequence ID" value="ENSP00000375875.4"/>
    <property type="gene ID" value="ENSG00000085978.22"/>
</dbReference>
<dbReference type="Ensembl" id="ENST00000625501.3">
    <molecule id="Q676U5-1"/>
    <property type="protein sequence ID" value="ENSP00000487542.1"/>
    <property type="gene ID" value="ENSG00000281089.3"/>
</dbReference>
<dbReference type="Ensembl" id="ENST00000626623.2">
    <molecule id="Q676U5-5"/>
    <property type="protein sequence ID" value="ENSP00000487298.1"/>
    <property type="gene ID" value="ENSG00000281089.3"/>
</dbReference>
<dbReference type="Ensembl" id="ENST00000630066.2">
    <molecule id="Q676U5-2"/>
    <property type="protein sequence ID" value="ENSP00000487446.1"/>
    <property type="gene ID" value="ENSG00000281089.3"/>
</dbReference>
<dbReference type="Ensembl" id="ENST00000630204.2">
    <molecule id="Q676U5-4"/>
    <property type="protein sequence ID" value="ENSP00000487455.1"/>
    <property type="gene ID" value="ENSG00000281089.3"/>
</dbReference>
<dbReference type="GeneID" id="55054"/>
<dbReference type="KEGG" id="hsa:55054"/>
<dbReference type="MANE-Select" id="ENST00000392017.9">
    <property type="protein sequence ID" value="ENSP00000375872.4"/>
    <property type="RefSeq nucleotide sequence ID" value="NM_030803.7"/>
    <property type="RefSeq protein sequence ID" value="NP_110430.5"/>
</dbReference>
<dbReference type="UCSC" id="uc002vtx.3">
    <molecule id="Q676U5-1"/>
    <property type="organism name" value="human"/>
</dbReference>
<dbReference type="AGR" id="HGNC:21498"/>
<dbReference type="CTD" id="55054"/>
<dbReference type="DisGeNET" id="55054"/>
<dbReference type="GeneCards" id="ATG16L1"/>
<dbReference type="HGNC" id="HGNC:21498">
    <property type="gene designation" value="ATG16L1"/>
</dbReference>
<dbReference type="HPA" id="ENSG00000085978">
    <property type="expression patterns" value="Low tissue specificity"/>
</dbReference>
<dbReference type="MalaCards" id="ATG16L1"/>
<dbReference type="MIM" id="610767">
    <property type="type" value="gene"/>
</dbReference>
<dbReference type="MIM" id="611081">
    <property type="type" value="phenotype"/>
</dbReference>
<dbReference type="neXtProt" id="NX_Q676U5"/>
<dbReference type="OpenTargets" id="ENSG00000085978"/>
<dbReference type="PharmGKB" id="PA134902949"/>
<dbReference type="VEuPathDB" id="HostDB:ENSG00000085978"/>
<dbReference type="eggNOG" id="KOG0288">
    <property type="taxonomic scope" value="Eukaryota"/>
</dbReference>
<dbReference type="GeneTree" id="ENSGT00940000153936"/>
<dbReference type="HOGENOM" id="CLU_000288_57_10_1"/>
<dbReference type="InParanoid" id="Q676U5"/>
<dbReference type="OMA" id="WGRPCIS"/>
<dbReference type="OrthoDB" id="6262491at2759"/>
<dbReference type="PAN-GO" id="Q676U5">
    <property type="GO annotations" value="3 GO annotations based on evolutionary models"/>
</dbReference>
<dbReference type="PhylomeDB" id="Q676U5"/>
<dbReference type="TreeFam" id="TF315541"/>
<dbReference type="PathwayCommons" id="Q676U5"/>
<dbReference type="Reactome" id="R-HSA-1632852">
    <property type="pathway name" value="Macroautophagy"/>
</dbReference>
<dbReference type="SignaLink" id="Q676U5"/>
<dbReference type="SIGNOR" id="Q676U5"/>
<dbReference type="BioGRID-ORCS" id="55054">
    <property type="hits" value="18 hits in 1168 CRISPR screens"/>
</dbReference>
<dbReference type="ChiTaRS" id="ATG16L1">
    <property type="organism name" value="human"/>
</dbReference>
<dbReference type="EvolutionaryTrace" id="Q676U5"/>
<dbReference type="GeneWiki" id="ATG16L1"/>
<dbReference type="GenomeRNAi" id="55054"/>
<dbReference type="Pharos" id="Q676U5">
    <property type="development level" value="Tbio"/>
</dbReference>
<dbReference type="PRO" id="PR:Q676U5"/>
<dbReference type="Proteomes" id="UP000005640">
    <property type="component" value="Chromosome 2"/>
</dbReference>
<dbReference type="RNAct" id="Q676U5">
    <property type="molecule type" value="protein"/>
</dbReference>
<dbReference type="Bgee" id="ENSG00000085978">
    <property type="expression patterns" value="Expressed in right hemisphere of cerebellum and 149 other cell types or tissues"/>
</dbReference>
<dbReference type="ExpressionAtlas" id="Q676U5">
    <property type="expression patterns" value="baseline and differential"/>
</dbReference>
<dbReference type="GO" id="GO:0034274">
    <property type="term" value="C:Atg12-Atg5-Atg16 complex"/>
    <property type="evidence" value="ECO:0000314"/>
    <property type="project" value="UniProtKB"/>
</dbReference>
<dbReference type="GO" id="GO:0005776">
    <property type="term" value="C:autophagosome"/>
    <property type="evidence" value="ECO:0000250"/>
    <property type="project" value="UniProtKB"/>
</dbReference>
<dbReference type="GO" id="GO:0000421">
    <property type="term" value="C:autophagosome membrane"/>
    <property type="evidence" value="ECO:0000314"/>
    <property type="project" value="UniProtKB"/>
</dbReference>
<dbReference type="GO" id="GO:0030424">
    <property type="term" value="C:axon"/>
    <property type="evidence" value="ECO:0007669"/>
    <property type="project" value="GOC"/>
</dbReference>
<dbReference type="GO" id="GO:0005930">
    <property type="term" value="C:axoneme"/>
    <property type="evidence" value="ECO:0000250"/>
    <property type="project" value="UniProtKB"/>
</dbReference>
<dbReference type="GO" id="GO:0005829">
    <property type="term" value="C:cytosol"/>
    <property type="evidence" value="ECO:0000304"/>
    <property type="project" value="Reactome"/>
</dbReference>
<dbReference type="GO" id="GO:0036020">
    <property type="term" value="C:endolysosome membrane"/>
    <property type="evidence" value="ECO:0000314"/>
    <property type="project" value="UniProtKB"/>
</dbReference>
<dbReference type="GO" id="GO:0098978">
    <property type="term" value="C:glutamatergic synapse"/>
    <property type="evidence" value="ECO:0007669"/>
    <property type="project" value="Ensembl"/>
</dbReference>
<dbReference type="GO" id="GO:0034045">
    <property type="term" value="C:phagophore assembly site membrane"/>
    <property type="evidence" value="ECO:0000314"/>
    <property type="project" value="UniProtKB"/>
</dbReference>
<dbReference type="GO" id="GO:0097225">
    <property type="term" value="C:sperm midpiece"/>
    <property type="evidence" value="ECO:0000250"/>
    <property type="project" value="UniProtKB"/>
</dbReference>
<dbReference type="GO" id="GO:0120095">
    <property type="term" value="C:vacuole-isolation membrane contact site"/>
    <property type="evidence" value="ECO:0000314"/>
    <property type="project" value="UniProtKB"/>
</dbReference>
<dbReference type="GO" id="GO:0051020">
    <property type="term" value="F:GTPase binding"/>
    <property type="evidence" value="ECO:0000353"/>
    <property type="project" value="UniProtKB"/>
</dbReference>
<dbReference type="GO" id="GO:0042802">
    <property type="term" value="F:identical protein binding"/>
    <property type="evidence" value="ECO:0000353"/>
    <property type="project" value="IntAct"/>
</dbReference>
<dbReference type="GO" id="GO:0043495">
    <property type="term" value="F:protein-membrane adaptor activity"/>
    <property type="evidence" value="ECO:0000315"/>
    <property type="project" value="UniProt"/>
</dbReference>
<dbReference type="GO" id="GO:0019787">
    <property type="term" value="F:ubiquitin-like protein transferase activity"/>
    <property type="evidence" value="ECO:0000304"/>
    <property type="project" value="Reactome"/>
</dbReference>
<dbReference type="GO" id="GO:0000045">
    <property type="term" value="P:autophagosome assembly"/>
    <property type="evidence" value="ECO:0000315"/>
    <property type="project" value="UniProt"/>
</dbReference>
<dbReference type="GO" id="GO:0098930">
    <property type="term" value="P:axonal transport"/>
    <property type="evidence" value="ECO:0007669"/>
    <property type="project" value="Ensembl"/>
</dbReference>
<dbReference type="GO" id="GO:0006501">
    <property type="term" value="P:C-terminal protein lipidation"/>
    <property type="evidence" value="ECO:0000314"/>
    <property type="project" value="UniProtKB"/>
</dbReference>
<dbReference type="GO" id="GO:0022038">
    <property type="term" value="P:corpus callosum development"/>
    <property type="evidence" value="ECO:0007669"/>
    <property type="project" value="Ensembl"/>
</dbReference>
<dbReference type="GO" id="GO:0051607">
    <property type="term" value="P:defense response to virus"/>
    <property type="evidence" value="ECO:0007669"/>
    <property type="project" value="Ensembl"/>
</dbReference>
<dbReference type="GO" id="GO:0140059">
    <property type="term" value="P:dendrite arborization"/>
    <property type="evidence" value="ECO:0007669"/>
    <property type="project" value="Ensembl"/>
</dbReference>
<dbReference type="GO" id="GO:0021766">
    <property type="term" value="P:hippocampus development"/>
    <property type="evidence" value="ECO:0007669"/>
    <property type="project" value="Ensembl"/>
</dbReference>
<dbReference type="GO" id="GO:0016236">
    <property type="term" value="P:macroautophagy"/>
    <property type="evidence" value="ECO:0000314"/>
    <property type="project" value="UniProtKB"/>
</dbReference>
<dbReference type="GO" id="GO:0016237">
    <property type="term" value="P:microautophagy"/>
    <property type="evidence" value="ECO:0000314"/>
    <property type="project" value="UniProtKB"/>
</dbReference>
<dbReference type="GO" id="GO:1903860">
    <property type="term" value="P:negative regulation of dendrite extension"/>
    <property type="evidence" value="ECO:0007669"/>
    <property type="project" value="Ensembl"/>
</dbReference>
<dbReference type="GO" id="GO:0039689">
    <property type="term" value="P:negative stranded viral RNA replication"/>
    <property type="evidence" value="ECO:0007669"/>
    <property type="project" value="Ensembl"/>
</dbReference>
<dbReference type="GO" id="GO:0010508">
    <property type="term" value="P:positive regulation of autophagy"/>
    <property type="evidence" value="ECO:0007669"/>
    <property type="project" value="Ensembl"/>
</dbReference>
<dbReference type="GO" id="GO:0034497">
    <property type="term" value="P:protein localization to phagophore assembly site"/>
    <property type="evidence" value="ECO:0000315"/>
    <property type="project" value="UniProtKB"/>
</dbReference>
<dbReference type="GO" id="GO:0015031">
    <property type="term" value="P:protein transport"/>
    <property type="evidence" value="ECO:0007669"/>
    <property type="project" value="UniProtKB-KW"/>
</dbReference>
<dbReference type="GO" id="GO:0098792">
    <property type="term" value="P:xenophagy"/>
    <property type="evidence" value="ECO:0007669"/>
    <property type="project" value="Ensembl"/>
</dbReference>
<dbReference type="CDD" id="cd22887">
    <property type="entry name" value="Atg16_CCD"/>
    <property type="match status" value="1"/>
</dbReference>
<dbReference type="CDD" id="cd00200">
    <property type="entry name" value="WD40"/>
    <property type="match status" value="1"/>
</dbReference>
<dbReference type="DisProt" id="DP02148"/>
<dbReference type="FunFam" id="2.130.10.10:FF:000337">
    <property type="entry name" value="ATG16 autophagy related 16-like 1 (S. cerevisiae)"/>
    <property type="match status" value="1"/>
</dbReference>
<dbReference type="FunFam" id="2.130.10.10:FF:000607">
    <property type="entry name" value="Autophagy related 16 like 1"/>
    <property type="match status" value="1"/>
</dbReference>
<dbReference type="FunFam" id="1.20.5.170:FF:000039">
    <property type="entry name" value="Autophagy-related protein 16-1 isoform 1"/>
    <property type="match status" value="1"/>
</dbReference>
<dbReference type="FunFam" id="2.130.10.10:FF:000155">
    <property type="entry name" value="Autophagy-related protein 16-1 isoform 1"/>
    <property type="match status" value="1"/>
</dbReference>
<dbReference type="Gene3D" id="1.20.5.170">
    <property type="match status" value="1"/>
</dbReference>
<dbReference type="Gene3D" id="2.130.10.10">
    <property type="entry name" value="YVTN repeat-like/Quinoprotein amine dehydrogenase"/>
    <property type="match status" value="2"/>
</dbReference>
<dbReference type="InterPro" id="IPR045160">
    <property type="entry name" value="ATG16"/>
</dbReference>
<dbReference type="InterPro" id="IPR013923">
    <property type="entry name" value="Autophagy-rel_prot_16_dom"/>
</dbReference>
<dbReference type="InterPro" id="IPR020472">
    <property type="entry name" value="G-protein_beta_WD-40_rep"/>
</dbReference>
<dbReference type="InterPro" id="IPR015943">
    <property type="entry name" value="WD40/YVTN_repeat-like_dom_sf"/>
</dbReference>
<dbReference type="InterPro" id="IPR019775">
    <property type="entry name" value="WD40_repeat_CS"/>
</dbReference>
<dbReference type="InterPro" id="IPR036322">
    <property type="entry name" value="WD40_repeat_dom_sf"/>
</dbReference>
<dbReference type="InterPro" id="IPR001680">
    <property type="entry name" value="WD40_rpt"/>
</dbReference>
<dbReference type="PANTHER" id="PTHR19878">
    <property type="entry name" value="AUTOPHAGY PROTEIN 16-LIKE"/>
    <property type="match status" value="1"/>
</dbReference>
<dbReference type="PANTHER" id="PTHR19878:SF6">
    <property type="entry name" value="AUTOPHAGY-RELATED PROTEIN 16-1"/>
    <property type="match status" value="1"/>
</dbReference>
<dbReference type="Pfam" id="PF08614">
    <property type="entry name" value="ATG16"/>
    <property type="match status" value="1"/>
</dbReference>
<dbReference type="Pfam" id="PF00400">
    <property type="entry name" value="WD40"/>
    <property type="match status" value="5"/>
</dbReference>
<dbReference type="PRINTS" id="PR00320">
    <property type="entry name" value="GPROTEINBRPT"/>
</dbReference>
<dbReference type="SMART" id="SM00320">
    <property type="entry name" value="WD40"/>
    <property type="match status" value="7"/>
</dbReference>
<dbReference type="SUPFAM" id="SSF50978">
    <property type="entry name" value="WD40 repeat-like"/>
    <property type="match status" value="1"/>
</dbReference>
<dbReference type="PROSITE" id="PS00678">
    <property type="entry name" value="WD_REPEATS_1"/>
    <property type="match status" value="3"/>
</dbReference>
<dbReference type="PROSITE" id="PS50082">
    <property type="entry name" value="WD_REPEATS_2"/>
    <property type="match status" value="6"/>
</dbReference>
<dbReference type="PROSITE" id="PS50294">
    <property type="entry name" value="WD_REPEATS_REGION"/>
    <property type="match status" value="1"/>
</dbReference>
<gene>
    <name evidence="44 46" type="primary">ATG16L1</name>
    <name evidence="43" type="synonym">APG16L</name>
    <name evidence="40" type="ORF">UNQ9393/PRO34307</name>
</gene>
<reference key="1">
    <citation type="journal article" date="2004" name="DNA Seq.">
        <title>Cloning and analysis of human Apg16L.</title>
        <authorList>
            <person name="Zheng H."/>
            <person name="Ji C."/>
            <person name="Li J."/>
            <person name="Jiang H."/>
            <person name="Ren M."/>
            <person name="Lu Q."/>
            <person name="Gu S."/>
            <person name="Mao Y."/>
            <person name="Xie Y."/>
        </authorList>
    </citation>
    <scope>NUCLEOTIDE SEQUENCE [MRNA] (ISOFORM 1)</scope>
    <scope>VARIANT ALA-300</scope>
    <source>
        <tissue>Fetal brain</tissue>
    </source>
</reference>
<reference key="2">
    <citation type="journal article" date="2007" name="Nat. Genet.">
        <title>A genome-wide association scan of nonsynonymous SNPs identifies a susceptibility variant for Crohn disease in ATG16L1.</title>
        <authorList>
            <person name="Hampe J."/>
            <person name="Franke A."/>
            <person name="Rosenstiel P."/>
            <person name="Till A."/>
            <person name="Teuber M."/>
            <person name="Huse K."/>
            <person name="Albrecht M."/>
            <person name="Mayr G."/>
            <person name="De La Vega F.M."/>
            <person name="Briggs J."/>
            <person name="Guenther S."/>
            <person name="Prescott N.J."/>
            <person name="Onnie C.M."/>
            <person name="Haesler R."/>
            <person name="Sipos B."/>
            <person name="Foelsch U.R."/>
            <person name="Lengauer T."/>
            <person name="Platzer M."/>
            <person name="Mathew C.G."/>
            <person name="Krawczak M."/>
            <person name="Schreiber S."/>
        </authorList>
    </citation>
    <scope>NUCLEOTIDE SEQUENCE [MRNA] (ISOFORMS 2 AND 5)</scope>
    <scope>INVOLVEMENT IN SUSCEPTIBILITY TO IBD10</scope>
    <scope>VARIANT ALA-300</scope>
</reference>
<reference key="3">
    <citation type="journal article" date="2003" name="Genome Res.">
        <title>The secreted protein discovery initiative (SPDI), a large-scale effort to identify novel human secreted and transmembrane proteins: a bioinformatics assessment.</title>
        <authorList>
            <person name="Clark H.F."/>
            <person name="Gurney A.L."/>
            <person name="Abaya E."/>
            <person name="Baker K."/>
            <person name="Baldwin D.T."/>
            <person name="Brush J."/>
            <person name="Chen J."/>
            <person name="Chow B."/>
            <person name="Chui C."/>
            <person name="Crowley C."/>
            <person name="Currell B."/>
            <person name="Deuel B."/>
            <person name="Dowd P."/>
            <person name="Eaton D."/>
            <person name="Foster J.S."/>
            <person name="Grimaldi C."/>
            <person name="Gu Q."/>
            <person name="Hass P.E."/>
            <person name="Heldens S."/>
            <person name="Huang A."/>
            <person name="Kim H.S."/>
            <person name="Klimowski L."/>
            <person name="Jin Y."/>
            <person name="Johnson S."/>
            <person name="Lee J."/>
            <person name="Lewis L."/>
            <person name="Liao D."/>
            <person name="Mark M.R."/>
            <person name="Robbie E."/>
            <person name="Sanchez C."/>
            <person name="Schoenfeld J."/>
            <person name="Seshagiri S."/>
            <person name="Simmons L."/>
            <person name="Singh J."/>
            <person name="Smith V."/>
            <person name="Stinson J."/>
            <person name="Vagts A."/>
            <person name="Vandlen R.L."/>
            <person name="Watanabe C."/>
            <person name="Wieand D."/>
            <person name="Woods K."/>
            <person name="Xie M.-H."/>
            <person name="Yansura D.G."/>
            <person name="Yi S."/>
            <person name="Yu G."/>
            <person name="Yuan J."/>
            <person name="Zhang M."/>
            <person name="Zhang Z."/>
            <person name="Goddard A.D."/>
            <person name="Wood W.I."/>
            <person name="Godowski P.J."/>
            <person name="Gray A.M."/>
        </authorList>
    </citation>
    <scope>NUCLEOTIDE SEQUENCE [LARGE SCALE MRNA] (ISOFORM 3)</scope>
</reference>
<reference key="4">
    <citation type="journal article" date="2004" name="Nat. Genet.">
        <title>Complete sequencing and characterization of 21,243 full-length human cDNAs.</title>
        <authorList>
            <person name="Ota T."/>
            <person name="Suzuki Y."/>
            <person name="Nishikawa T."/>
            <person name="Otsuki T."/>
            <person name="Sugiyama T."/>
            <person name="Irie R."/>
            <person name="Wakamatsu A."/>
            <person name="Hayashi K."/>
            <person name="Sato H."/>
            <person name="Nagai K."/>
            <person name="Kimura K."/>
            <person name="Makita H."/>
            <person name="Sekine M."/>
            <person name="Obayashi M."/>
            <person name="Nishi T."/>
            <person name="Shibahara T."/>
            <person name="Tanaka T."/>
            <person name="Ishii S."/>
            <person name="Yamamoto J."/>
            <person name="Saito K."/>
            <person name="Kawai Y."/>
            <person name="Isono Y."/>
            <person name="Nakamura Y."/>
            <person name="Nagahari K."/>
            <person name="Murakami K."/>
            <person name="Yasuda T."/>
            <person name="Iwayanagi T."/>
            <person name="Wagatsuma M."/>
            <person name="Shiratori A."/>
            <person name="Sudo H."/>
            <person name="Hosoiri T."/>
            <person name="Kaku Y."/>
            <person name="Kodaira H."/>
            <person name="Kondo H."/>
            <person name="Sugawara M."/>
            <person name="Takahashi M."/>
            <person name="Kanda K."/>
            <person name="Yokoi T."/>
            <person name="Furuya T."/>
            <person name="Kikkawa E."/>
            <person name="Omura Y."/>
            <person name="Abe K."/>
            <person name="Kamihara K."/>
            <person name="Katsuta N."/>
            <person name="Sato K."/>
            <person name="Tanikawa M."/>
            <person name="Yamazaki M."/>
            <person name="Ninomiya K."/>
            <person name="Ishibashi T."/>
            <person name="Yamashita H."/>
            <person name="Murakawa K."/>
            <person name="Fujimori K."/>
            <person name="Tanai H."/>
            <person name="Kimata M."/>
            <person name="Watanabe M."/>
            <person name="Hiraoka S."/>
            <person name="Chiba Y."/>
            <person name="Ishida S."/>
            <person name="Ono Y."/>
            <person name="Takiguchi S."/>
            <person name="Watanabe S."/>
            <person name="Yosida M."/>
            <person name="Hotuta T."/>
            <person name="Kusano J."/>
            <person name="Kanehori K."/>
            <person name="Takahashi-Fujii A."/>
            <person name="Hara H."/>
            <person name="Tanase T.-O."/>
            <person name="Nomura Y."/>
            <person name="Togiya S."/>
            <person name="Komai F."/>
            <person name="Hara R."/>
            <person name="Takeuchi K."/>
            <person name="Arita M."/>
            <person name="Imose N."/>
            <person name="Musashino K."/>
            <person name="Yuuki H."/>
            <person name="Oshima A."/>
            <person name="Sasaki N."/>
            <person name="Aotsuka S."/>
            <person name="Yoshikawa Y."/>
            <person name="Matsunawa H."/>
            <person name="Ichihara T."/>
            <person name="Shiohata N."/>
            <person name="Sano S."/>
            <person name="Moriya S."/>
            <person name="Momiyama H."/>
            <person name="Satoh N."/>
            <person name="Takami S."/>
            <person name="Terashima Y."/>
            <person name="Suzuki O."/>
            <person name="Nakagawa S."/>
            <person name="Senoh A."/>
            <person name="Mizoguchi H."/>
            <person name="Goto Y."/>
            <person name="Shimizu F."/>
            <person name="Wakebe H."/>
            <person name="Hishigaki H."/>
            <person name="Watanabe T."/>
            <person name="Sugiyama A."/>
            <person name="Takemoto M."/>
            <person name="Kawakami B."/>
            <person name="Yamazaki M."/>
            <person name="Watanabe K."/>
            <person name="Kumagai A."/>
            <person name="Itakura S."/>
            <person name="Fukuzumi Y."/>
            <person name="Fujimori Y."/>
            <person name="Komiyama M."/>
            <person name="Tashiro H."/>
            <person name="Tanigami A."/>
            <person name="Fujiwara T."/>
            <person name="Ono T."/>
            <person name="Yamada K."/>
            <person name="Fujii Y."/>
            <person name="Ozaki K."/>
            <person name="Hirao M."/>
            <person name="Ohmori Y."/>
            <person name="Kawabata A."/>
            <person name="Hikiji T."/>
            <person name="Kobatake N."/>
            <person name="Inagaki H."/>
            <person name="Ikema Y."/>
            <person name="Okamoto S."/>
            <person name="Okitani R."/>
            <person name="Kawakami T."/>
            <person name="Noguchi S."/>
            <person name="Itoh T."/>
            <person name="Shigeta K."/>
            <person name="Senba T."/>
            <person name="Matsumura K."/>
            <person name="Nakajima Y."/>
            <person name="Mizuno T."/>
            <person name="Morinaga M."/>
            <person name="Sasaki M."/>
            <person name="Togashi T."/>
            <person name="Oyama M."/>
            <person name="Hata H."/>
            <person name="Watanabe M."/>
            <person name="Komatsu T."/>
            <person name="Mizushima-Sugano J."/>
            <person name="Satoh T."/>
            <person name="Shirai Y."/>
            <person name="Takahashi Y."/>
            <person name="Nakagawa K."/>
            <person name="Okumura K."/>
            <person name="Nagase T."/>
            <person name="Nomura N."/>
            <person name="Kikuchi H."/>
            <person name="Masuho Y."/>
            <person name="Yamashita R."/>
            <person name="Nakai K."/>
            <person name="Yada T."/>
            <person name="Nakamura Y."/>
            <person name="Ohara O."/>
            <person name="Isogai T."/>
            <person name="Sugano S."/>
        </authorList>
    </citation>
    <scope>NUCLEOTIDE SEQUENCE [LARGE SCALE MRNA] (ISOFORM 4)</scope>
    <scope>NUCLEOTIDE SEQUENCE [LARGE SCALE MRNA] OF 55-607 (ISOFORM 2)</scope>
    <source>
        <tissue>Brain</tissue>
        <tissue>Placenta</tissue>
        <tissue>Small intestine</tissue>
    </source>
</reference>
<reference key="5">
    <citation type="journal article" date="2005" name="Nature">
        <title>Generation and annotation of the DNA sequences of human chromosomes 2 and 4.</title>
        <authorList>
            <person name="Hillier L.W."/>
            <person name="Graves T.A."/>
            <person name="Fulton R.S."/>
            <person name="Fulton L.A."/>
            <person name="Pepin K.H."/>
            <person name="Minx P."/>
            <person name="Wagner-McPherson C."/>
            <person name="Layman D."/>
            <person name="Wylie K."/>
            <person name="Sekhon M."/>
            <person name="Becker M.C."/>
            <person name="Fewell G.A."/>
            <person name="Delehaunty K.D."/>
            <person name="Miner T.L."/>
            <person name="Nash W.E."/>
            <person name="Kremitzki C."/>
            <person name="Oddy L."/>
            <person name="Du H."/>
            <person name="Sun H."/>
            <person name="Bradshaw-Cordum H."/>
            <person name="Ali J."/>
            <person name="Carter J."/>
            <person name="Cordes M."/>
            <person name="Harris A."/>
            <person name="Isak A."/>
            <person name="van Brunt A."/>
            <person name="Nguyen C."/>
            <person name="Du F."/>
            <person name="Courtney L."/>
            <person name="Kalicki J."/>
            <person name="Ozersky P."/>
            <person name="Abbott S."/>
            <person name="Armstrong J."/>
            <person name="Belter E.A."/>
            <person name="Caruso L."/>
            <person name="Cedroni M."/>
            <person name="Cotton M."/>
            <person name="Davidson T."/>
            <person name="Desai A."/>
            <person name="Elliott G."/>
            <person name="Erb T."/>
            <person name="Fronick C."/>
            <person name="Gaige T."/>
            <person name="Haakenson W."/>
            <person name="Haglund K."/>
            <person name="Holmes A."/>
            <person name="Harkins R."/>
            <person name="Kim K."/>
            <person name="Kruchowski S.S."/>
            <person name="Strong C.M."/>
            <person name="Grewal N."/>
            <person name="Goyea E."/>
            <person name="Hou S."/>
            <person name="Levy A."/>
            <person name="Martinka S."/>
            <person name="Mead K."/>
            <person name="McLellan M.D."/>
            <person name="Meyer R."/>
            <person name="Randall-Maher J."/>
            <person name="Tomlinson C."/>
            <person name="Dauphin-Kohlberg S."/>
            <person name="Kozlowicz-Reilly A."/>
            <person name="Shah N."/>
            <person name="Swearengen-Shahid S."/>
            <person name="Snider J."/>
            <person name="Strong J.T."/>
            <person name="Thompson J."/>
            <person name="Yoakum M."/>
            <person name="Leonard S."/>
            <person name="Pearman C."/>
            <person name="Trani L."/>
            <person name="Radionenko M."/>
            <person name="Waligorski J.E."/>
            <person name="Wang C."/>
            <person name="Rock S.M."/>
            <person name="Tin-Wollam A.-M."/>
            <person name="Maupin R."/>
            <person name="Latreille P."/>
            <person name="Wendl M.C."/>
            <person name="Yang S.-P."/>
            <person name="Pohl C."/>
            <person name="Wallis J.W."/>
            <person name="Spieth J."/>
            <person name="Bieri T.A."/>
            <person name="Berkowicz N."/>
            <person name="Nelson J.O."/>
            <person name="Osborne J."/>
            <person name="Ding L."/>
            <person name="Meyer R."/>
            <person name="Sabo A."/>
            <person name="Shotland Y."/>
            <person name="Sinha P."/>
            <person name="Wohldmann P.E."/>
            <person name="Cook L.L."/>
            <person name="Hickenbotham M.T."/>
            <person name="Eldred J."/>
            <person name="Williams D."/>
            <person name="Jones T.A."/>
            <person name="She X."/>
            <person name="Ciccarelli F.D."/>
            <person name="Izaurralde E."/>
            <person name="Taylor J."/>
            <person name="Schmutz J."/>
            <person name="Myers R.M."/>
            <person name="Cox D.R."/>
            <person name="Huang X."/>
            <person name="McPherson J.D."/>
            <person name="Mardis E.R."/>
            <person name="Clifton S.W."/>
            <person name="Warren W.C."/>
            <person name="Chinwalla A.T."/>
            <person name="Eddy S.R."/>
            <person name="Marra M.A."/>
            <person name="Ovcharenko I."/>
            <person name="Furey T.S."/>
            <person name="Miller W."/>
            <person name="Eichler E.E."/>
            <person name="Bork P."/>
            <person name="Suyama M."/>
            <person name="Torrents D."/>
            <person name="Waterston R.H."/>
            <person name="Wilson R.K."/>
        </authorList>
    </citation>
    <scope>NUCLEOTIDE SEQUENCE [LARGE SCALE GENOMIC DNA]</scope>
</reference>
<reference key="6">
    <citation type="submission" date="2005-07" db="EMBL/GenBank/DDBJ databases">
        <authorList>
            <person name="Mural R.J."/>
            <person name="Istrail S."/>
            <person name="Sutton G.G."/>
            <person name="Florea L."/>
            <person name="Halpern A.L."/>
            <person name="Mobarry C.M."/>
            <person name="Lippert R."/>
            <person name="Walenz B."/>
            <person name="Shatkay H."/>
            <person name="Dew I."/>
            <person name="Miller J.R."/>
            <person name="Flanigan M.J."/>
            <person name="Edwards N.J."/>
            <person name="Bolanos R."/>
            <person name="Fasulo D."/>
            <person name="Halldorsson B.V."/>
            <person name="Hannenhalli S."/>
            <person name="Turner R."/>
            <person name="Yooseph S."/>
            <person name="Lu F."/>
            <person name="Nusskern D.R."/>
            <person name="Shue B.C."/>
            <person name="Zheng X.H."/>
            <person name="Zhong F."/>
            <person name="Delcher A.L."/>
            <person name="Huson D.H."/>
            <person name="Kravitz S.A."/>
            <person name="Mouchard L."/>
            <person name="Reinert K."/>
            <person name="Remington K.A."/>
            <person name="Clark A.G."/>
            <person name="Waterman M.S."/>
            <person name="Eichler E.E."/>
            <person name="Adams M.D."/>
            <person name="Hunkapiller M.W."/>
            <person name="Myers E.W."/>
            <person name="Venter J.C."/>
        </authorList>
    </citation>
    <scope>NUCLEOTIDE SEQUENCE [LARGE SCALE GENOMIC DNA]</scope>
</reference>
<reference key="7">
    <citation type="journal article" date="2004" name="Genome Res.">
        <title>The status, quality, and expansion of the NIH full-length cDNA project: the Mammalian Gene Collection (MGC).</title>
        <authorList>
            <consortium name="The MGC Project Team"/>
        </authorList>
    </citation>
    <scope>NUCLEOTIDE SEQUENCE [LARGE SCALE MRNA] OF 114-607 (ISOFORM 2)</scope>
    <source>
        <tissue>Mammary gland</tissue>
    </source>
</reference>
<reference key="8">
    <citation type="journal article" date="2007" name="BMC Genomics">
        <title>The full-ORF clone resource of the German cDNA consortium.</title>
        <authorList>
            <person name="Bechtel S."/>
            <person name="Rosenfelder H."/>
            <person name="Duda A."/>
            <person name="Schmidt C.P."/>
            <person name="Ernst U."/>
            <person name="Wellenreuther R."/>
            <person name="Mehrle A."/>
            <person name="Schuster C."/>
            <person name="Bahr A."/>
            <person name="Bloecker H."/>
            <person name="Heubner D."/>
            <person name="Hoerlein A."/>
            <person name="Michel G."/>
            <person name="Wedler H."/>
            <person name="Koehrer K."/>
            <person name="Ottenwaelder B."/>
            <person name="Poustka A."/>
            <person name="Wiemann S."/>
            <person name="Schupp I."/>
        </authorList>
    </citation>
    <scope>NUCLEOTIDE SEQUENCE [LARGE SCALE MRNA] OF 513-607</scope>
    <source>
        <tissue>Testis</tissue>
    </source>
</reference>
<reference key="9">
    <citation type="journal article" date="2008" name="Nature">
        <title>A key role for autophagy and the autophagy gene Atg16l1 in mouse and human intestinal Paneth cells.</title>
        <authorList>
            <person name="Cadwell K."/>
            <person name="Liu J.Y."/>
            <person name="Brown S.L."/>
            <person name="Miyoshi H."/>
            <person name="Loh J."/>
            <person name="Lennerz J.K."/>
            <person name="Kishi C."/>
            <person name="Kc W."/>
            <person name="Carrero J.A."/>
            <person name="Hunt S."/>
            <person name="Stone C.D."/>
            <person name="Brunt E.M."/>
            <person name="Xavier R.J."/>
            <person name="Sleckman B.P."/>
            <person name="Li E."/>
            <person name="Mizushima N."/>
            <person name="Stappenbeck T.S."/>
            <person name="Virgin H.W. IV"/>
        </authorList>
    </citation>
    <scope>FUNCTION</scope>
</reference>
<reference key="10">
    <citation type="journal article" date="2008" name="Proc. Natl. Acad. Sci. U.S.A.">
        <title>A quantitative atlas of mitotic phosphorylation.</title>
        <authorList>
            <person name="Dephoure N."/>
            <person name="Zhou C."/>
            <person name="Villen J."/>
            <person name="Beausoleil S.A."/>
            <person name="Bakalarski C.E."/>
            <person name="Elledge S.J."/>
            <person name="Gygi S.P."/>
        </authorList>
    </citation>
    <scope>PHOSPHORYLATION [LARGE SCALE ANALYSIS] AT SER-287</scope>
    <scope>IDENTIFICATION BY MASS SPECTROMETRY [LARGE SCALE ANALYSIS]</scope>
    <source>
        <tissue>Cervix carcinoma</tissue>
    </source>
</reference>
<reference key="11">
    <citation type="journal article" date="2010" name="Gastroenterology">
        <title>ATG16L1 and NOD2 interact in an autophagy-dependent antibacterial pathway implicated in Crohn's disease pathogenesis.</title>
        <authorList>
            <person name="Homer C.R."/>
            <person name="Richmond A.L."/>
            <person name="Rebert N.A."/>
            <person name="Achkar J.P."/>
            <person name="McDonald C."/>
        </authorList>
    </citation>
    <scope>FUNCTION</scope>
    <scope>INTERACTION WITH NOD2</scope>
</reference>
<reference key="12">
    <citation type="journal article" date="2010" name="Nat. Cell Biol.">
        <title>Plasma membrane contributes to the formation of pre-autophagosomal structures.</title>
        <authorList>
            <person name="Ravikumar B."/>
            <person name="Moreau K."/>
            <person name="Jahreiss L."/>
            <person name="Puri C."/>
            <person name="Rubinsztein D.C."/>
        </authorList>
    </citation>
    <scope>INTERACTION WITH CLTC</scope>
    <scope>SUBCELLULAR LOCATION</scope>
</reference>
<reference key="13">
    <citation type="journal article" date="2010" name="Sci. Signal.">
        <title>Quantitative phosphoproteomics reveals widespread full phosphorylation site occupancy during mitosis.</title>
        <authorList>
            <person name="Olsen J.V."/>
            <person name="Vermeulen M."/>
            <person name="Santamaria A."/>
            <person name="Kumar C."/>
            <person name="Miller M.L."/>
            <person name="Jensen L.J."/>
            <person name="Gnad F."/>
            <person name="Cox J."/>
            <person name="Jensen T.S."/>
            <person name="Nigg E.A."/>
            <person name="Brunak S."/>
            <person name="Mann M."/>
        </authorList>
    </citation>
    <scope>PHOSPHORYLATION [LARGE SCALE ANALYSIS] AT SER-269 AND SER-287</scope>
    <scope>IDENTIFICATION BY MASS SPECTROMETRY [LARGE SCALE ANALYSIS]</scope>
    <source>
        <tissue>Cervix carcinoma</tissue>
    </source>
</reference>
<reference key="14">
    <citation type="journal article" date="2011" name="J. Biol. Chem.">
        <title>RUTBC1 protein, a Rab9A effector that activates GTP hydrolysis by Rab32 and Rab33B proteins.</title>
        <authorList>
            <person name="Nottingham R.M."/>
            <person name="Ganley I.G."/>
            <person name="Barr F.A."/>
            <person name="Lambright D.G."/>
            <person name="Pfeffer S.R."/>
        </authorList>
    </citation>
    <scope>INTERACTION WITH RAB33B</scope>
</reference>
<reference key="15">
    <citation type="journal article" date="2012" name="Immunity">
        <title>The mitochondrial proteins NLRX1 and TUFM form a complex that regulates type I interferon and autophagy.</title>
        <authorList>
            <person name="Lei Y."/>
            <person name="Wen H."/>
            <person name="Yu Y."/>
            <person name="Taxman D.J."/>
            <person name="Zhang L."/>
            <person name="Widman D.G."/>
            <person name="Swanson K.V."/>
            <person name="Wen K.W."/>
            <person name="Damania B."/>
            <person name="Moore C.B."/>
            <person name="Giguere P.M."/>
            <person name="Siderovski D.P."/>
            <person name="Hiscott J."/>
            <person name="Razani B."/>
            <person name="Semenkovich C.F."/>
            <person name="Chen X."/>
            <person name="Ting J.P."/>
        </authorList>
    </citation>
    <scope>FUNCTION</scope>
    <scope>INTERACTION WITH TUFM</scope>
</reference>
<reference key="16">
    <citation type="journal article" date="2013" name="EMBO J.">
        <title>TMEM59 defines a novel ATG16L1-binding motif that promotes local activation of LC3.</title>
        <authorList>
            <person name="Boada-Romero E."/>
            <person name="Letek M."/>
            <person name="Fleischer A."/>
            <person name="Pallauf K."/>
            <person name="Ramon-Barros C."/>
            <person name="Pimentel-Muinos F.X."/>
        </authorList>
    </citation>
    <scope>FUNCTION</scope>
    <scope>INTERACTION WITH TMEM59; TLR2 AND NOD2</scope>
</reference>
<reference key="17">
    <citation type="journal article" date="2013" name="EMBO Rep.">
        <title>FIP200 regulates targeting of Atg16L1 to the isolation membrane.</title>
        <authorList>
            <person name="Nishimura T."/>
            <person name="Kaizuka T."/>
            <person name="Cadwell K."/>
            <person name="Sahani M.H."/>
            <person name="Saitoh T."/>
            <person name="Akira S."/>
            <person name="Virgin H.W."/>
            <person name="Mizushima N."/>
        </authorList>
    </citation>
    <scope>FUNCTION</scope>
    <scope>INTERACTION WITH RB1CC1</scope>
    <scope>SUBCELLULAR LOCATION</scope>
</reference>
<reference key="18">
    <citation type="journal article" date="2013" name="Immunity">
        <title>The protein ATG16L1 suppresses inflammatory cytokines induced by the intracellular sensors Nod1 and Nod2 in an autophagy-independent manner.</title>
        <authorList>
            <person name="Sorbara M.T."/>
            <person name="Ellison L.K."/>
            <person name="Ramjeet M."/>
            <person name="Travassos L.H."/>
            <person name="Jones N.L."/>
            <person name="Girardin S.E."/>
            <person name="Philpott D.J."/>
        </authorList>
    </citation>
    <scope>FUNCTION</scope>
</reference>
<reference key="19">
    <citation type="journal article" date="2013" name="J. Proteome Res.">
        <title>Toward a comprehensive characterization of a human cancer cell phosphoproteome.</title>
        <authorList>
            <person name="Zhou H."/>
            <person name="Di Palma S."/>
            <person name="Preisinger C."/>
            <person name="Peng M."/>
            <person name="Polat A.N."/>
            <person name="Heck A.J."/>
            <person name="Mohammed S."/>
        </authorList>
    </citation>
    <scope>PHOSPHORYLATION [LARGE SCALE ANALYSIS] AT SER-287</scope>
    <scope>IDENTIFICATION BY MASS SPECTROMETRY [LARGE SCALE ANALYSIS]</scope>
    <source>
        <tissue>Cervix carcinoma</tissue>
        <tissue>Erythroleukemia</tissue>
    </source>
</reference>
<reference key="20">
    <citation type="journal article" date="2013" name="Nat. Struct. Mol. Biol.">
        <title>Interaction between FIP200 and ATG16L1 distinguishes ULK1 complex-dependent and -independent autophagy.</title>
        <authorList>
            <person name="Gammoh N."/>
            <person name="Florey O."/>
            <person name="Overholtzer M."/>
            <person name="Jiang X."/>
        </authorList>
    </citation>
    <scope>INTERACTION WITH RB1CC1</scope>
</reference>
<reference key="21">
    <citation type="journal article" date="2015" name="Autophagy">
        <title>ATG16L1 phosphorylation is oppositely regulated by CSNK2/casein kinase 2 and PPP1/protein phosphatase 1 which determines the fate of cardiomyocytes during hypoxia/reoxygenation.</title>
        <authorList>
            <person name="Song H."/>
            <person name="Pu J."/>
            <person name="Wang L."/>
            <person name="Wu L."/>
            <person name="Xiao J."/>
            <person name="Liu Q."/>
            <person name="Chen J."/>
            <person name="Zhang M."/>
            <person name="Liu Y."/>
            <person name="Ni M."/>
            <person name="Mo J."/>
            <person name="Zheng Y."/>
            <person name="Wan D."/>
            <person name="Cai X."/>
            <person name="Cao Y."/>
            <person name="Xiao W."/>
            <person name="Ye L."/>
            <person name="Tu E."/>
            <person name="Lin Z."/>
            <person name="Wen J."/>
            <person name="Lu X."/>
            <person name="He J."/>
            <person name="Peng Y."/>
            <person name="Su J."/>
            <person name="Zhang H."/>
            <person name="Zhao Y."/>
            <person name="Lin M."/>
            <person name="Zhang Z."/>
        </authorList>
    </citation>
    <scope>INTERACTION WITH ATG5-ATG12 COMPLEX AND PPP1CA</scope>
    <scope>PHOSPHORYLATION AT SER-139</scope>
    <scope>MUTAGENESIS OF SER-139; VAL-540 AND PHE-542</scope>
</reference>
<reference key="22">
    <citation type="journal article" date="2015" name="J. Cell Biol.">
        <title>TRIM-mediated precision autophagy targets cytoplasmic regulators of innate immunity.</title>
        <authorList>
            <person name="Kimura T."/>
            <person name="Jain A."/>
            <person name="Choi S.W."/>
            <person name="Mandell M.A."/>
            <person name="Schroder K."/>
            <person name="Johansen T."/>
            <person name="Deretic V."/>
        </authorList>
    </citation>
    <scope>INTERACTION WITH MEFV</scope>
</reference>
<reference key="23">
    <citation type="journal article" date="2015" name="Mol. Cell">
        <title>IRGM governs the core autophagy machinery to conduct antimicrobial defense.</title>
        <authorList>
            <person name="Chauhan S."/>
            <person name="Mandell M.A."/>
            <person name="Deretic V."/>
        </authorList>
    </citation>
    <scope>INTERACTION WITH IRGM</scope>
</reference>
<reference key="24">
    <citation type="journal article" date="2017" name="Nat. Commun.">
        <title>WIPI3 and WIPI4 beta-propellers are scaffolds for LKB1-AMPK-TSC signalling circuits in the control of autophagy.</title>
        <authorList>
            <person name="Bakula D."/>
            <person name="Mueller A.J."/>
            <person name="Zuleger T."/>
            <person name="Takacs Z."/>
            <person name="Franz-Wachtel M."/>
            <person name="Thost A.K."/>
            <person name="Brigger D."/>
            <person name="Tschan M.P."/>
            <person name="Frickey T."/>
            <person name="Robenek H."/>
            <person name="Macek B."/>
            <person name="Proikas-Cezanne T."/>
        </authorList>
    </citation>
    <scope>INTERACTION WITH WIPI1 AND WIPI2</scope>
</reference>
<reference key="25">
    <citation type="journal article" date="2018" name="EMBO J.">
        <title>The WD40 domain of ATG16L1 is required for its non-canonical role in lipidation of LC3 at single membranes.</title>
        <authorList>
            <person name="Fletcher K."/>
            <person name="Ulferts R."/>
            <person name="Jacquin E."/>
            <person name="Veith T."/>
            <person name="Gammoh N."/>
            <person name="Arasteh J.M."/>
            <person name="Mayer U."/>
            <person name="Carding S.R."/>
            <person name="Wileman T."/>
            <person name="Beale R."/>
            <person name="Florey O."/>
        </authorList>
    </citation>
    <scope>FUNCTION</scope>
    <scope>SUBCELLULAR LOCATION</scope>
    <scope>INTERACTION WITH ATG5-ATG12 COMPLEX</scope>
    <scope>DOMAIN</scope>
    <scope>MUTAGENESIS OF PHE-467 AND LYS-490</scope>
</reference>
<reference key="26">
    <citation type="journal article" date="2018" name="EMBO J.">
        <title>TRIM16 controls assembly and degradation of protein aggregates by modulating the p62-NRF2 axis and autophagy.</title>
        <authorList>
            <person name="Jena K.K."/>
            <person name="Kolapalli S.P."/>
            <person name="Mehto S."/>
            <person name="Nath P."/>
            <person name="Das B."/>
            <person name="Sahoo P.K."/>
            <person name="Ahad A."/>
            <person name="Syed G.H."/>
            <person name="Raghav S.K."/>
            <person name="Senapati S."/>
            <person name="Chauhan S."/>
            <person name="Chauhan S."/>
        </authorList>
    </citation>
    <scope>INTERACTION WITH TRIM16</scope>
</reference>
<reference key="27">
    <citation type="journal article" date="2019" name="Nat. Cell Biol.">
        <title>Distinct functions of ATG16L1 isoforms in membrane binding and LC3B lipidation in autophagy-related processes.</title>
        <authorList>
            <person name="Lystad A.H."/>
            <person name="Carlsson S.R."/>
            <person name="de la Ballina L.R."/>
            <person name="Kauffman K.J."/>
            <person name="Nag S."/>
            <person name="Yoshimori T."/>
            <person name="Melia T.J."/>
            <person name="Simonsen A."/>
        </authorList>
    </citation>
    <scope>FUNCTION</scope>
    <scope>INTERACTION WITH ATG5-ATG12 COMPLEX</scope>
    <scope>MUTAGENESIS OF 32-PHE--ILE-36; 308-VAL--VAL-310 AND PHE-467</scope>
</reference>
<reference key="28">
    <citation type="journal article" date="2021" name="Cell Death Differ.">
        <title>SPATA33 is an autophagy mediator for cargo selectivity in germline mitophagy.</title>
        <authorList>
            <person name="Zhang Y."/>
            <person name="Xu X."/>
            <person name="Hu M."/>
            <person name="Wang X."/>
            <person name="Cheng H."/>
            <person name="Zhou R."/>
        </authorList>
    </citation>
    <scope>INTERACTION WITH SPATA33</scope>
</reference>
<reference key="29">
    <citation type="journal article" date="2021" name="Mol. Cell">
        <title>Non-canonical autophagy drives alternative ATG8 conjugation to phosphatidylserine.</title>
        <authorList>
            <person name="Durgan J."/>
            <person name="Lystad A.H."/>
            <person name="Sloan K."/>
            <person name="Carlsson S.R."/>
            <person name="Wilson M.I."/>
            <person name="Marcassa E."/>
            <person name="Ulferts R."/>
            <person name="Webster J."/>
            <person name="Lopez-Clavijo A.F."/>
            <person name="Wakelam M.J."/>
            <person name="Beale R."/>
            <person name="Simonsen A."/>
            <person name="Oxley D."/>
            <person name="Florey O."/>
        </authorList>
    </citation>
    <scope>FUNCTION</scope>
    <scope>MUTAGENESIS OF LYS-490</scope>
</reference>
<reference key="30">
    <citation type="journal article" date="2013" name="Nat. Struct. Mol. Biol.">
        <title>Structure of the human ATG12-ATG5 conjugate required for LC3 lipidation in autophagy.</title>
        <authorList>
            <person name="Otomo C."/>
            <person name="Metlagel Z."/>
            <person name="Takaesu G."/>
            <person name="Otomo T."/>
        </authorList>
    </citation>
    <scope>X-RAY CRYSTALLOGRAPHY (2.70 ANGSTROMS) OF 11-43 IN COMPLEX WITH ATG5 AND ATG12</scope>
    <scope>INTERACTION WITH ATG5</scope>
</reference>
<reference key="31">
    <citation type="journal article" date="2013" name="Proc. Natl. Acad. Sci. U.S.A.">
        <title>Structural basis of ATG3 recognition by the autophagic ubiquitin-like protein ATG12.</title>
        <authorList>
            <person name="Metlagel Z."/>
            <person name="Otomo C."/>
            <person name="Takaesu G."/>
            <person name="Otomo T."/>
        </authorList>
    </citation>
    <scope>X-RAY CRYSTALLOGRAPHY (2.19 ANGSTROMS) OF 11-43 IN COMPLEX WITH ATG3; ATG5 AND ATG12</scope>
    <scope>INTERACTION WITH ATG5</scope>
</reference>
<reference key="32">
    <citation type="journal article" date="2015" name="Autophagy">
        <title>Insights into autophagosome maturation revealed by the structures of ATG5 with its interacting partners.</title>
        <authorList>
            <person name="Kim J.H."/>
            <person name="Hong S.B."/>
            <person name="Lee J.K."/>
            <person name="Han S."/>
            <person name="Roh K.H."/>
            <person name="Lee K.E."/>
            <person name="Kim Y.K."/>
            <person name="Choi E.J."/>
            <person name="Song H.K."/>
        </authorList>
    </citation>
    <scope>X-RAY CRYSTALLOGRAPHY (2.70 ANGSTROMS) OF 1-69</scope>
    <scope>SUBUNIT</scope>
    <scope>INTERACTION WITH ATG5</scope>
    <scope>MUTAGENESIS OF ILE-17; LEU-21; ARG-24 AND ILE-36</scope>
</reference>
<reference key="33">
    <citation type="journal article" date="2016" name="Elife">
        <title>Mutation in ATG5 reduces autophagy and leads to ataxia with developmental delay.</title>
        <authorList>
            <person name="Kim M."/>
            <person name="Sandford E."/>
            <person name="Gatica D."/>
            <person name="Qiu Y."/>
            <person name="Liu X."/>
            <person name="Zheng Y."/>
            <person name="Schulman B.A."/>
            <person name="Xu J."/>
            <person name="Semple I."/>
            <person name="Ro S.H."/>
            <person name="Kim B."/>
            <person name="Mavioglu R.N."/>
            <person name="Tolun A."/>
            <person name="Jipa A."/>
            <person name="Takats S."/>
            <person name="Karpati M."/>
            <person name="Li J.Z."/>
            <person name="Yapici Z."/>
            <person name="Juhasz G."/>
            <person name="Lee J.H."/>
            <person name="Klionsky D.J."/>
            <person name="Burmeister M."/>
        </authorList>
    </citation>
    <scope>X-RAY CRYSTALLOGRAPHY (3.00 ANGSTROMS) OF 1-69</scope>
    <scope>INTERACTION WITH ATG5</scope>
</reference>
<reference key="34">
    <citation type="journal article" date="2007" name="Gastroenterology">
        <title>A nonsynonymous SNP in ATG16L1 predisposes to ileal Crohn's disease and is independent of CARD15 and IBD5.</title>
        <authorList>
            <person name="Prescott N.J."/>
            <person name="Fisher S.A."/>
            <person name="Franke A."/>
            <person name="Hampe J."/>
            <person name="Onnie C.M."/>
            <person name="Soars D."/>
            <person name="Bagnall R."/>
            <person name="Mirza M.M."/>
            <person name="Sanderson J."/>
            <person name="Forbes A."/>
            <person name="Mansfield J.C."/>
            <person name="Lewis C.M."/>
            <person name="Schreiber S."/>
            <person name="Mathew C.G."/>
        </authorList>
    </citation>
    <scope>VARIANT ALA-300</scope>
    <scope>INVOLVEMENT IN SUSCEPTIBILITY TO IBD10</scope>
</reference>
<reference key="35">
    <citation type="journal article" date="2007" name="Nat. Genet.">
        <title>Genome-wide association study identifies new susceptibility loci for Crohn disease and implicates autophagy in disease pathogenesis.</title>
        <authorList>
            <person name="Rioux J.D."/>
            <person name="Xavier R.J."/>
            <person name="Taylor K.D."/>
            <person name="Silverberg M.S."/>
            <person name="Goyette P."/>
            <person name="Huett A."/>
            <person name="Green T."/>
            <person name="Kuballa P."/>
            <person name="Barmada M.M."/>
            <person name="Datta L.W."/>
            <person name="Shugart Y.Y."/>
            <person name="Griffiths A.M."/>
            <person name="Targan S.R."/>
            <person name="Ippoliti A.F."/>
            <person name="Bernard E.-J."/>
            <person name="Mei L."/>
            <person name="Nicolae D.L."/>
            <person name="Regueiro M."/>
            <person name="Schumm L.P."/>
            <person name="Steinhart A.H."/>
            <person name="Rotter J.I."/>
            <person name="Duerr R.H."/>
            <person name="Cho J.H."/>
            <person name="Daly M.J."/>
            <person name="Brant S.R."/>
        </authorList>
    </citation>
    <scope>VARIANT ALA-300</scope>
    <scope>INVOLVEMENT IN SUSCEPTIBILITY TO IBD10</scope>
</reference>
<reference key="36">
    <citation type="journal article" date="2008" name="Am. J. Gastroenterol.">
        <title>ATG16L1 and IL23R are associated with inflammatory bowel diseases but not with celiac disease in the Netherlands.</title>
        <authorList>
            <person name="Weersma R.K."/>
            <person name="Zhernakova A."/>
            <person name="Nolte I.M."/>
            <person name="Lefebvre C."/>
            <person name="Rioux J.D."/>
            <person name="Mulder F."/>
            <person name="van Dullemen H.M."/>
            <person name="Kleibeuker J.H."/>
            <person name="Wijmenga C."/>
            <person name="Dijkstra G."/>
        </authorList>
    </citation>
    <scope>VARIANT ALA-300</scope>
    <scope>INVOLVEMENT IN SUSCEPTIBILITY TO IBD10</scope>
</reference>
<reference key="37">
    <citation type="journal article" date="2008" name="Dig. Liver Dis.">
        <title>ATG16L1 and IL23 receptor (IL23R) genes are associated with disease susceptibility in Hungarian CD patients.</title>
        <authorList>
            <consortium name="Hungarian IBD Study Group"/>
            <person name="Lakatos P.L."/>
            <person name="Szamosi T."/>
            <person name="Szilvasi A."/>
            <person name="Molnar E."/>
            <person name="Lakatos L."/>
            <person name="Kovacs A."/>
            <person name="Molnar T."/>
            <person name="Altorjay I."/>
            <person name="Papp M."/>
            <person name="Tulassay Z."/>
            <person name="Miheller P."/>
            <person name="Papp J."/>
            <person name="Tordai A."/>
            <person name="Andrikovics H."/>
        </authorList>
    </citation>
    <scope>VARIANT ALA-300</scope>
    <scope>INVOLVEMENT IN SUSCEPTIBILITY TO IBD10</scope>
</reference>
<reference key="38">
    <citation type="journal article" date="2009" name="Acta Paediatr.">
        <title>Autophagy 16-like 1 rs2241880 G allele is associated with Crohn's disease in German children.</title>
        <authorList>
            <person name="Lacher M."/>
            <person name="Schroepf S."/>
            <person name="Ballauff A."/>
            <person name="Lohse P."/>
            <person name="von Schweinitz D."/>
            <person name="Kappler R."/>
            <person name="Koletzko S."/>
        </authorList>
    </citation>
    <scope>VARIANT ALA-300</scope>
    <scope>INVOLVEMENT IN SUSCEPTIBILITY TO IBD10</scope>
</reference>
<reference key="39">
    <citation type="journal article" date="2009" name="Inflamm. Bowel Dis.">
        <title>Autophagy gene ATG16L1 but not IRGM is associated with Crohn's disease in Canadian children.</title>
        <authorList>
            <person name="Amre D.K."/>
            <person name="Mack D.R."/>
            <person name="Morgan K."/>
            <person name="Krupoves A."/>
            <person name="Costea I."/>
            <person name="Lambrette P."/>
            <person name="Grimard G."/>
            <person name="Dong J."/>
            <person name="Feguery H."/>
            <person name="Bucionis V."/>
            <person name="Deslandres C."/>
            <person name="Levy E."/>
            <person name="Seidman E.G."/>
        </authorList>
    </citation>
    <scope>VARIANT ALA-300</scope>
    <scope>INVOLVEMENT IN SUSCEPTIBILITY TO IBD10</scope>
</reference>
<reference key="40">
    <citation type="journal article" date="2014" name="Dig. Liver Dis.">
        <title>Autophagy genes variants and paediatric Crohn's disease phenotype: a single-centre experience.</title>
        <authorList>
            <person name="Strisciuglio C."/>
            <person name="Auricchio R."/>
            <person name="Martinelli M."/>
            <person name="Staiano A."/>
            <person name="Giugliano F.P."/>
            <person name="Andreozzi M."/>
            <person name="De Rosa M."/>
            <person name="Giannetti E."/>
            <person name="Gianfrani C."/>
            <person name="Izzo P."/>
            <person name="Troncone R."/>
            <person name="Miele E."/>
        </authorList>
    </citation>
    <scope>VARIANT ALA-300</scope>
    <scope>INVOLVEMENT IN SUSCEPTIBILITY TO IBD10</scope>
</reference>
<reference key="41">
    <citation type="journal article" date="2014" name="Nature">
        <title>A Crohn's disease variant in Atg16l1 enhances its degradation by caspase 3.</title>
        <authorList>
            <person name="Murthy A."/>
            <person name="Li Y."/>
            <person name="Peng I."/>
            <person name="Reichelt M."/>
            <person name="Katakam A.K."/>
            <person name="Noubade R."/>
            <person name="Roose-Girma M."/>
            <person name="Devoss J."/>
            <person name="Diehl L."/>
            <person name="Graham R.R."/>
            <person name="van Lookeren Campagne M."/>
        </authorList>
    </citation>
    <scope>CHARACTERIZATION OF VARIANT ALA-300</scope>
    <scope>FUNCTION IN AUTOPHAGY</scope>
    <scope>CLEAVAGE BY CASP3</scope>
    <scope>MUTAGENESIS OF ASP-299</scope>
</reference>
<reference key="42">
    <citation type="journal article" date="2014" name="Mol. Cell">
        <title>WIPI2 links LC3 conjugation with PI3P, autophagosome formation, and pathogen clearance by recruiting Atg12-5-16L1.</title>
        <authorList>
            <person name="Dooley H.C."/>
            <person name="Razi M."/>
            <person name="Polson H.E."/>
            <person name="Girardin S.E."/>
            <person name="Wilson M.I."/>
            <person name="Tooze S.A."/>
        </authorList>
    </citation>
    <scope>FUNCTION</scope>
    <scope>INTERACTION WITH WIPI2 AND RB1CC1</scope>
    <scope>DOMAIN</scope>
    <scope>MUTAGENESIS OF GLU-226 AND GLU-230</scope>
</reference>
<reference key="43">
    <citation type="journal article" date="2021" name="Autophagy">
        <title>RAB33B recruits the ATG16L1 complex to the phagophore via a noncanonical RAB binding protein.</title>
        <authorList>
            <person name="Pantoom S."/>
            <person name="Konstantinidis G."/>
            <person name="Voss S."/>
            <person name="Han H."/>
            <person name="Hofnagel O."/>
            <person name="Li Z."/>
            <person name="Wu Y.W."/>
        </authorList>
    </citation>
    <scope>INTERACTION WITH RAB33B</scope>
    <scope>MUTAGENESIS OF ASN-206 AND ASN-209</scope>
    <scope>SUBCELLULAR LOCATION</scope>
</reference>
<reference key="44">
    <citation type="journal article" date="2016" name="Gut">
        <title>The Thr300Ala variant in ATG16L1 is associated with improved survival in human colorectal cancer and enhanced production of type I interferon.</title>
        <authorList>
            <person name="Grimm W.A."/>
            <person name="Messer J.S."/>
            <person name="Murphy S.F."/>
            <person name="Nero T."/>
            <person name="Lodolce J.P."/>
            <person name="Weber C.R."/>
            <person name="Logsdon M.F."/>
            <person name="Bartulis S."/>
            <person name="Sylvester B.E."/>
            <person name="Springer A."/>
            <person name="Dougherty U."/>
            <person name="Niewold T.B."/>
            <person name="Kupfer S.S."/>
            <person name="Ellis N."/>
            <person name="Huo D."/>
            <person name="Bissonnette M."/>
            <person name="Boone D.L."/>
        </authorList>
    </citation>
    <scope>CHARACTERIZATION OF VARIANT ALA-300</scope>
    <scope>FUNCTION</scope>
</reference>
<reference key="45">
    <citation type="journal article" date="2016" name="Nat. Commun.">
        <title>The T300A Crohn's disease risk polymorphism impairs function of the WD40 domain of ATG16L1.</title>
        <authorList>
            <person name="Boada-Romero E."/>
            <person name="Serramito-Gomez I."/>
            <person name="Sacristan M.P."/>
            <person name="Boone D.L."/>
            <person name="Xavier R.J."/>
            <person name="Pimentel-Muinos F.X."/>
        </authorList>
    </citation>
    <scope>CHARACTERIZATION OF VARIANT ALA-300</scope>
    <scope>FUNCTION</scope>
    <scope>INTERACTION WITH TMEM59</scope>
</reference>
<accession>Q676U5</accession>
<accession>A3EXK9</accession>
<accession>A3EXL0</accession>
<accession>B6ZDH0</accession>
<accession>Q6IPN1</accession>
<accession>Q6UXW4</accession>
<accession>Q6ZVZ5</accession>
<accession>Q8NCY2</accession>
<accession>Q96JV5</accession>
<accession>Q9H619</accession>